<proteinExistence type="evidence at protein level"/>
<organism>
    <name type="scientific">Homo sapiens</name>
    <name type="common">Human</name>
    <dbReference type="NCBI Taxonomy" id="9606"/>
    <lineage>
        <taxon>Eukaryota</taxon>
        <taxon>Metazoa</taxon>
        <taxon>Chordata</taxon>
        <taxon>Craniata</taxon>
        <taxon>Vertebrata</taxon>
        <taxon>Euteleostomi</taxon>
        <taxon>Mammalia</taxon>
        <taxon>Eutheria</taxon>
        <taxon>Euarchontoglires</taxon>
        <taxon>Primates</taxon>
        <taxon>Haplorrhini</taxon>
        <taxon>Catarrhini</taxon>
        <taxon>Hominidae</taxon>
        <taxon>Homo</taxon>
    </lineage>
</organism>
<dbReference type="EMBL" id="M60618">
    <property type="protein sequence ID" value="AAA35537.1"/>
    <property type="molecule type" value="mRNA"/>
</dbReference>
<dbReference type="EMBL" id="U36501">
    <property type="protein sequence ID" value="AAC50743.1"/>
    <property type="molecule type" value="mRNA"/>
</dbReference>
<dbReference type="EMBL" id="AF056322">
    <property type="protein sequence ID" value="AAC39790.1"/>
    <property type="molecule type" value="mRNA"/>
</dbReference>
<dbReference type="EMBL" id="AF255565">
    <property type="protein sequence ID" value="AAK51202.1"/>
    <property type="molecule type" value="mRNA"/>
</dbReference>
<dbReference type="EMBL" id="AK293373">
    <property type="protein sequence ID" value="BAG56886.1"/>
    <property type="molecule type" value="mRNA"/>
</dbReference>
<dbReference type="EMBL" id="AC009949">
    <property type="status" value="NOT_ANNOTATED_CDS"/>
    <property type="molecule type" value="Genomic_DNA"/>
</dbReference>
<dbReference type="EMBL" id="AC010149">
    <property type="status" value="NOT_ANNOTATED_CDS"/>
    <property type="molecule type" value="Genomic_DNA"/>
</dbReference>
<dbReference type="EMBL" id="BC011562">
    <property type="protein sequence ID" value="AAH11562.1"/>
    <property type="molecule type" value="mRNA"/>
</dbReference>
<dbReference type="EMBL" id="X95472">
    <property type="protein sequence ID" value="CAA64744.1"/>
    <property type="molecule type" value="Genomic_DNA"/>
</dbReference>
<dbReference type="EMBL" id="L79986">
    <property type="protein sequence ID" value="AAL77441.1"/>
    <property type="molecule type" value="mRNA"/>
</dbReference>
<dbReference type="EMBL" id="L79987">
    <property type="protein sequence ID" value="AAL77439.1"/>
    <property type="molecule type" value="mRNA"/>
</dbReference>
<dbReference type="EMBL" id="L79988">
    <property type="protein sequence ID" value="AAL77438.1"/>
    <property type="molecule type" value="mRNA"/>
</dbReference>
<dbReference type="EMBL" id="AF076675">
    <property type="protein sequence ID" value="AAF39781.1"/>
    <property type="molecule type" value="Genomic_DNA"/>
</dbReference>
<dbReference type="EMBL" id="AF378670">
    <property type="protein sequence ID" value="AAK57703.1"/>
    <property type="molecule type" value="Genomic_DNA"/>
</dbReference>
<dbReference type="CCDS" id="CCDS2477.1">
    <molecule id="P23497-1"/>
</dbReference>
<dbReference type="CCDS" id="CCDS42832.1">
    <molecule id="P23497-4"/>
</dbReference>
<dbReference type="CCDS" id="CCDS56170.1">
    <molecule id="P23497-3"/>
</dbReference>
<dbReference type="CCDS" id="CCDS56171.1">
    <molecule id="P23497-2"/>
</dbReference>
<dbReference type="CCDS" id="CCDS56172.1">
    <molecule id="P23497-6"/>
</dbReference>
<dbReference type="CCDS" id="CCDS56173.1">
    <molecule id="P23497-7"/>
</dbReference>
<dbReference type="PIR" id="A37244">
    <property type="entry name" value="A37244"/>
</dbReference>
<dbReference type="RefSeq" id="NP_001073860.1">
    <molecule id="P23497-4"/>
    <property type="nucleotide sequence ID" value="NM_001080391.2"/>
</dbReference>
<dbReference type="RefSeq" id="NP_001193630.1">
    <molecule id="P23497-3"/>
    <property type="nucleotide sequence ID" value="NM_001206701.2"/>
</dbReference>
<dbReference type="RefSeq" id="NP_001193631.1">
    <molecule id="P23497-2"/>
    <property type="nucleotide sequence ID" value="NM_001206702.2"/>
</dbReference>
<dbReference type="RefSeq" id="NP_001193632.1">
    <molecule id="P23497-6"/>
    <property type="nucleotide sequence ID" value="NM_001206703.2"/>
</dbReference>
<dbReference type="RefSeq" id="NP_001193633.1">
    <molecule id="P23497-7"/>
    <property type="nucleotide sequence ID" value="NM_001206704.2"/>
</dbReference>
<dbReference type="RefSeq" id="NP_003104.2">
    <molecule id="P23497-1"/>
    <property type="nucleotide sequence ID" value="NM_003113.3"/>
</dbReference>
<dbReference type="PDB" id="1H5P">
    <property type="method" value="NMR"/>
    <property type="chains" value="A=595-688"/>
</dbReference>
<dbReference type="PDB" id="4PTB">
    <property type="method" value="X-ray"/>
    <property type="resolution" value="1.60 A"/>
    <property type="chains" value="A/B=466-508"/>
</dbReference>
<dbReference type="PDB" id="5FB0">
    <property type="method" value="X-ray"/>
    <property type="resolution" value="2.70 A"/>
    <property type="chains" value="A/C=696-878"/>
</dbReference>
<dbReference type="PDB" id="5FB1">
    <property type="method" value="X-ray"/>
    <property type="resolution" value="2.10 A"/>
    <property type="chains" value="A=696-875"/>
</dbReference>
<dbReference type="PDB" id="5PWE">
    <property type="method" value="X-ray"/>
    <property type="resolution" value="1.69 A"/>
    <property type="chains" value="A/B=466-508"/>
</dbReference>
<dbReference type="PDB" id="5PWF">
    <property type="method" value="X-ray"/>
    <property type="resolution" value="1.48 A"/>
    <property type="chains" value="A/B=466-508"/>
</dbReference>
<dbReference type="PDB" id="5PWG">
    <property type="method" value="X-ray"/>
    <property type="resolution" value="1.46 A"/>
    <property type="chains" value="A/B=466-508"/>
</dbReference>
<dbReference type="PDB" id="5PWH">
    <property type="method" value="X-ray"/>
    <property type="resolution" value="1.50 A"/>
    <property type="chains" value="A/B=466-508"/>
</dbReference>
<dbReference type="PDB" id="5PWI">
    <property type="method" value="X-ray"/>
    <property type="resolution" value="1.62 A"/>
    <property type="chains" value="A/B=466-508"/>
</dbReference>
<dbReference type="PDB" id="5PWJ">
    <property type="method" value="X-ray"/>
    <property type="resolution" value="1.89 A"/>
    <property type="chains" value="A/B=466-508"/>
</dbReference>
<dbReference type="PDB" id="5PWK">
    <property type="method" value="X-ray"/>
    <property type="resolution" value="1.62 A"/>
    <property type="chains" value="A/B=466-508"/>
</dbReference>
<dbReference type="PDB" id="5PWL">
    <property type="method" value="X-ray"/>
    <property type="resolution" value="1.83 A"/>
    <property type="chains" value="A/B=466-508"/>
</dbReference>
<dbReference type="PDB" id="5PWM">
    <property type="method" value="X-ray"/>
    <property type="resolution" value="1.54 A"/>
    <property type="chains" value="A/B=466-508"/>
</dbReference>
<dbReference type="PDB" id="5PWN">
    <property type="method" value="X-ray"/>
    <property type="resolution" value="1.64 A"/>
    <property type="chains" value="A/B=466-508"/>
</dbReference>
<dbReference type="PDB" id="5PWO">
    <property type="method" value="X-ray"/>
    <property type="resolution" value="1.85 A"/>
    <property type="chains" value="A/B=466-508"/>
</dbReference>
<dbReference type="PDB" id="5PWP">
    <property type="method" value="X-ray"/>
    <property type="resolution" value="1.51 A"/>
    <property type="chains" value="A/B=466-508"/>
</dbReference>
<dbReference type="PDB" id="5PWQ">
    <property type="method" value="X-ray"/>
    <property type="resolution" value="1.52 A"/>
    <property type="chains" value="A/B=466-508"/>
</dbReference>
<dbReference type="PDB" id="5PWR">
    <property type="method" value="X-ray"/>
    <property type="resolution" value="1.46 A"/>
    <property type="chains" value="A/B=466-508"/>
</dbReference>
<dbReference type="PDB" id="5PWS">
    <property type="method" value="X-ray"/>
    <property type="resolution" value="1.40 A"/>
    <property type="chains" value="A/B=466-508"/>
</dbReference>
<dbReference type="PDB" id="5PWT">
    <property type="method" value="X-ray"/>
    <property type="resolution" value="1.58 A"/>
    <property type="chains" value="A/B=466-508"/>
</dbReference>
<dbReference type="PDB" id="5PWU">
    <property type="method" value="X-ray"/>
    <property type="resolution" value="1.44 A"/>
    <property type="chains" value="A/B=466-508"/>
</dbReference>
<dbReference type="PDB" id="5PWV">
    <property type="method" value="X-ray"/>
    <property type="resolution" value="1.58 A"/>
    <property type="chains" value="A/B=466-508"/>
</dbReference>
<dbReference type="PDB" id="5PWW">
    <property type="method" value="X-ray"/>
    <property type="resolution" value="1.59 A"/>
    <property type="chains" value="A/B=466-508"/>
</dbReference>
<dbReference type="PDB" id="5PWX">
    <property type="method" value="X-ray"/>
    <property type="resolution" value="1.69 A"/>
    <property type="chains" value="A/B=466-508"/>
</dbReference>
<dbReference type="PDB" id="5PWY">
    <property type="method" value="X-ray"/>
    <property type="resolution" value="1.98 A"/>
    <property type="chains" value="A/B=466-508"/>
</dbReference>
<dbReference type="PDB" id="5PWZ">
    <property type="method" value="X-ray"/>
    <property type="resolution" value="1.62 A"/>
    <property type="chains" value="A/B=466-508"/>
</dbReference>
<dbReference type="PDB" id="5PX0">
    <property type="method" value="X-ray"/>
    <property type="resolution" value="1.55 A"/>
    <property type="chains" value="A/B=466-508"/>
</dbReference>
<dbReference type="PDB" id="5PX1">
    <property type="method" value="X-ray"/>
    <property type="resolution" value="1.55 A"/>
    <property type="chains" value="A/B=466-508"/>
</dbReference>
<dbReference type="PDB" id="5PX2">
    <property type="method" value="X-ray"/>
    <property type="resolution" value="1.43 A"/>
    <property type="chains" value="A/B=466-508"/>
</dbReference>
<dbReference type="PDB" id="5PX3">
    <property type="method" value="X-ray"/>
    <property type="resolution" value="1.57 A"/>
    <property type="chains" value="A/B=466-508"/>
</dbReference>
<dbReference type="PDB" id="5PX4">
    <property type="method" value="X-ray"/>
    <property type="resolution" value="1.45 A"/>
    <property type="chains" value="A/B=466-508"/>
</dbReference>
<dbReference type="PDB" id="5PX5">
    <property type="method" value="X-ray"/>
    <property type="resolution" value="1.74 A"/>
    <property type="chains" value="A/B=466-508"/>
</dbReference>
<dbReference type="PDB" id="5PX6">
    <property type="method" value="X-ray"/>
    <property type="resolution" value="1.43 A"/>
    <property type="chains" value="A/B=466-508"/>
</dbReference>
<dbReference type="PDB" id="5PX7">
    <property type="method" value="X-ray"/>
    <property type="resolution" value="1.74 A"/>
    <property type="chains" value="A/B=466-508"/>
</dbReference>
<dbReference type="PDB" id="5PX8">
    <property type="method" value="X-ray"/>
    <property type="resolution" value="1.71 A"/>
    <property type="chains" value="A/B=466-508"/>
</dbReference>
<dbReference type="PDB" id="5PX9">
    <property type="method" value="X-ray"/>
    <property type="resolution" value="1.89 A"/>
    <property type="chains" value="A/B=466-508"/>
</dbReference>
<dbReference type="PDB" id="5PXA">
    <property type="method" value="X-ray"/>
    <property type="resolution" value="1.43 A"/>
    <property type="chains" value="A/B=466-508"/>
</dbReference>
<dbReference type="PDB" id="5PXB">
    <property type="method" value="X-ray"/>
    <property type="resolution" value="1.46 A"/>
    <property type="chains" value="A/B=466-508"/>
</dbReference>
<dbReference type="PDB" id="5PXC">
    <property type="method" value="X-ray"/>
    <property type="resolution" value="1.52 A"/>
    <property type="chains" value="A/B=466-508"/>
</dbReference>
<dbReference type="PDB" id="5PXD">
    <property type="method" value="X-ray"/>
    <property type="resolution" value="1.64 A"/>
    <property type="chains" value="A/B=466-508"/>
</dbReference>
<dbReference type="PDB" id="5PXE">
    <property type="method" value="X-ray"/>
    <property type="resolution" value="1.55 A"/>
    <property type="chains" value="A/B=466-508"/>
</dbReference>
<dbReference type="PDB" id="5PXF">
    <property type="method" value="X-ray"/>
    <property type="resolution" value="1.71 A"/>
    <property type="chains" value="A/B=466-508"/>
</dbReference>
<dbReference type="PDB" id="5PXG">
    <property type="method" value="X-ray"/>
    <property type="resolution" value="1.98 A"/>
    <property type="chains" value="A/B=466-508"/>
</dbReference>
<dbReference type="PDB" id="5PXH">
    <property type="method" value="X-ray"/>
    <property type="resolution" value="2.25 A"/>
    <property type="chains" value="A/B=466-508"/>
</dbReference>
<dbReference type="PDB" id="5PXI">
    <property type="method" value="X-ray"/>
    <property type="resolution" value="1.76 A"/>
    <property type="chains" value="A/B=466-508"/>
</dbReference>
<dbReference type="PDB" id="5PXJ">
    <property type="method" value="X-ray"/>
    <property type="resolution" value="1.68 A"/>
    <property type="chains" value="A/B=466-508"/>
</dbReference>
<dbReference type="PDB" id="5PXK">
    <property type="method" value="X-ray"/>
    <property type="resolution" value="1.98 A"/>
    <property type="chains" value="A/B=466-508"/>
</dbReference>
<dbReference type="PDB" id="5PXL">
    <property type="method" value="X-ray"/>
    <property type="resolution" value="1.35 A"/>
    <property type="chains" value="A/B=466-508"/>
</dbReference>
<dbReference type="PDB" id="5PXM">
    <property type="method" value="X-ray"/>
    <property type="resolution" value="1.59 A"/>
    <property type="chains" value="A/B=466-508"/>
</dbReference>
<dbReference type="PDB" id="5PXN">
    <property type="method" value="X-ray"/>
    <property type="resolution" value="1.43 A"/>
    <property type="chains" value="A/B=466-508"/>
</dbReference>
<dbReference type="PDB" id="5PXO">
    <property type="method" value="X-ray"/>
    <property type="resolution" value="1.78 A"/>
    <property type="chains" value="A/B=466-508"/>
</dbReference>
<dbReference type="PDB" id="5PXP">
    <property type="method" value="X-ray"/>
    <property type="resolution" value="1.86 A"/>
    <property type="chains" value="A/B=466-508"/>
</dbReference>
<dbReference type="PDB" id="5PXQ">
    <property type="method" value="X-ray"/>
    <property type="resolution" value="1.62 A"/>
    <property type="chains" value="A/B=466-508"/>
</dbReference>
<dbReference type="PDB" id="5PXR">
    <property type="method" value="X-ray"/>
    <property type="resolution" value="1.81 A"/>
    <property type="chains" value="A/B=466-508"/>
</dbReference>
<dbReference type="PDB" id="5PXS">
    <property type="method" value="X-ray"/>
    <property type="resolution" value="1.49 A"/>
    <property type="chains" value="A/B=466-508"/>
</dbReference>
<dbReference type="PDB" id="5PXT">
    <property type="method" value="X-ray"/>
    <property type="resolution" value="1.40 A"/>
    <property type="chains" value="A/B=466-508"/>
</dbReference>
<dbReference type="PDB" id="5PXU">
    <property type="method" value="X-ray"/>
    <property type="resolution" value="1.76 A"/>
    <property type="chains" value="A/B=466-508"/>
</dbReference>
<dbReference type="PDB" id="5PXV">
    <property type="method" value="X-ray"/>
    <property type="resolution" value="1.65 A"/>
    <property type="chains" value="A/B=466-508"/>
</dbReference>
<dbReference type="PDB" id="5PXW">
    <property type="method" value="X-ray"/>
    <property type="resolution" value="2.01 A"/>
    <property type="chains" value="A/B=466-508"/>
</dbReference>
<dbReference type="PDB" id="5PXX">
    <property type="method" value="X-ray"/>
    <property type="resolution" value="1.57 A"/>
    <property type="chains" value="A/B=466-508"/>
</dbReference>
<dbReference type="PDB" id="5PXY">
    <property type="method" value="X-ray"/>
    <property type="resolution" value="2.14 A"/>
    <property type="chains" value="A/B=466-508"/>
</dbReference>
<dbReference type="PDB" id="5PXZ">
    <property type="method" value="X-ray"/>
    <property type="resolution" value="1.65 A"/>
    <property type="chains" value="A/B=466-508"/>
</dbReference>
<dbReference type="PDB" id="5PY0">
    <property type="method" value="X-ray"/>
    <property type="resolution" value="1.70 A"/>
    <property type="chains" value="A/B=466-508"/>
</dbReference>
<dbReference type="PDB" id="5PY1">
    <property type="method" value="X-ray"/>
    <property type="resolution" value="1.74 A"/>
    <property type="chains" value="A/B=466-508"/>
</dbReference>
<dbReference type="PDB" id="5PY2">
    <property type="method" value="X-ray"/>
    <property type="resolution" value="1.62 A"/>
    <property type="chains" value="A/B=466-508"/>
</dbReference>
<dbReference type="PDB" id="5PY3">
    <property type="method" value="X-ray"/>
    <property type="resolution" value="1.78 A"/>
    <property type="chains" value="A/B=466-508"/>
</dbReference>
<dbReference type="PDB" id="5PY4">
    <property type="method" value="X-ray"/>
    <property type="resolution" value="1.67 A"/>
    <property type="chains" value="A/B=466-508"/>
</dbReference>
<dbReference type="PDB" id="5PY5">
    <property type="method" value="X-ray"/>
    <property type="resolution" value="1.44 A"/>
    <property type="chains" value="A/B=466-508"/>
</dbReference>
<dbReference type="PDB" id="5PY6">
    <property type="method" value="X-ray"/>
    <property type="resolution" value="1.74 A"/>
    <property type="chains" value="A/B=466-508"/>
</dbReference>
<dbReference type="PDB" id="5PY7">
    <property type="method" value="X-ray"/>
    <property type="resolution" value="1.68 A"/>
    <property type="chains" value="A/B=466-508"/>
</dbReference>
<dbReference type="PDB" id="5PY8">
    <property type="method" value="X-ray"/>
    <property type="resolution" value="1.66 A"/>
    <property type="chains" value="A/B=466-508"/>
</dbReference>
<dbReference type="PDB" id="5PY9">
    <property type="method" value="X-ray"/>
    <property type="resolution" value="1.73 A"/>
    <property type="chains" value="A/B=466-508"/>
</dbReference>
<dbReference type="PDB" id="5PYA">
    <property type="method" value="X-ray"/>
    <property type="resolution" value="1.55 A"/>
    <property type="chains" value="A/B=466-508"/>
</dbReference>
<dbReference type="PDB" id="5PYB">
    <property type="method" value="X-ray"/>
    <property type="resolution" value="1.74 A"/>
    <property type="chains" value="A/B=466-508"/>
</dbReference>
<dbReference type="PDB" id="5PYC">
    <property type="method" value="X-ray"/>
    <property type="resolution" value="1.87 A"/>
    <property type="chains" value="A/B=466-508"/>
</dbReference>
<dbReference type="PDB" id="5PYD">
    <property type="method" value="X-ray"/>
    <property type="resolution" value="2.02 A"/>
    <property type="chains" value="A/B=466-508"/>
</dbReference>
<dbReference type="PDB" id="5PYE">
    <property type="method" value="X-ray"/>
    <property type="resolution" value="1.81 A"/>
    <property type="chains" value="A/B=466-508"/>
</dbReference>
<dbReference type="PDB" id="5PYF">
    <property type="method" value="X-ray"/>
    <property type="resolution" value="1.83 A"/>
    <property type="chains" value="A/B=466-508"/>
</dbReference>
<dbReference type="PDB" id="5PYG">
    <property type="method" value="X-ray"/>
    <property type="resolution" value="1.95 A"/>
    <property type="chains" value="A/B=466-508"/>
</dbReference>
<dbReference type="PDB" id="5PYH">
    <property type="method" value="X-ray"/>
    <property type="resolution" value="1.74 A"/>
    <property type="chains" value="A/B=466-508"/>
</dbReference>
<dbReference type="PDB" id="5PYI">
    <property type="method" value="X-ray"/>
    <property type="resolution" value="2.29 A"/>
    <property type="chains" value="A/B=466-508"/>
</dbReference>
<dbReference type="PDB" id="5PYJ">
    <property type="method" value="X-ray"/>
    <property type="resolution" value="1.97 A"/>
    <property type="chains" value="A/B=466-508"/>
</dbReference>
<dbReference type="PDB" id="5PYK">
    <property type="method" value="X-ray"/>
    <property type="resolution" value="1.88 A"/>
    <property type="chains" value="A/B=466-508"/>
</dbReference>
<dbReference type="PDB" id="5PYL">
    <property type="method" value="X-ray"/>
    <property type="resolution" value="1.53 A"/>
    <property type="chains" value="A/B=466-508"/>
</dbReference>
<dbReference type="PDB" id="5PYM">
    <property type="method" value="X-ray"/>
    <property type="resolution" value="1.70 A"/>
    <property type="chains" value="A/B=466-508"/>
</dbReference>
<dbReference type="PDB" id="5PYN">
    <property type="method" value="X-ray"/>
    <property type="resolution" value="1.89 A"/>
    <property type="chains" value="A/B=466-508"/>
</dbReference>
<dbReference type="PDB" id="5PYO">
    <property type="method" value="X-ray"/>
    <property type="resolution" value="1.67 A"/>
    <property type="chains" value="A/B=466-508"/>
</dbReference>
<dbReference type="PDB" id="5PYP">
    <property type="method" value="X-ray"/>
    <property type="resolution" value="1.63 A"/>
    <property type="chains" value="A/B=466-508"/>
</dbReference>
<dbReference type="PDB" id="5PYQ">
    <property type="method" value="X-ray"/>
    <property type="resolution" value="1.97 A"/>
    <property type="chains" value="A/B=466-508"/>
</dbReference>
<dbReference type="PDB" id="5PYR">
    <property type="method" value="X-ray"/>
    <property type="resolution" value="1.94 A"/>
    <property type="chains" value="A/B=466-508"/>
</dbReference>
<dbReference type="PDB" id="5PYS">
    <property type="method" value="X-ray"/>
    <property type="resolution" value="2.09 A"/>
    <property type="chains" value="A/B=466-508"/>
</dbReference>
<dbReference type="PDB" id="5PYT">
    <property type="method" value="X-ray"/>
    <property type="resolution" value="2.13 A"/>
    <property type="chains" value="A/B=466-508"/>
</dbReference>
<dbReference type="PDB" id="5PYU">
    <property type="method" value="X-ray"/>
    <property type="resolution" value="1.74 A"/>
    <property type="chains" value="A/B=466-508"/>
</dbReference>
<dbReference type="PDB" id="5PYV">
    <property type="method" value="X-ray"/>
    <property type="resolution" value="1.94 A"/>
    <property type="chains" value="A/B=466-508"/>
</dbReference>
<dbReference type="PDB" id="5PYW">
    <property type="method" value="X-ray"/>
    <property type="resolution" value="1.45 A"/>
    <property type="chains" value="A/B=466-508"/>
</dbReference>
<dbReference type="PDB" id="5PYX">
    <property type="method" value="X-ray"/>
    <property type="resolution" value="1.57 A"/>
    <property type="chains" value="A/B=466-508"/>
</dbReference>
<dbReference type="PDB" id="5PYY">
    <property type="method" value="X-ray"/>
    <property type="resolution" value="1.64 A"/>
    <property type="chains" value="A/B=466-508"/>
</dbReference>
<dbReference type="PDB" id="5PYZ">
    <property type="method" value="X-ray"/>
    <property type="resolution" value="1.59 A"/>
    <property type="chains" value="A/B=466-508"/>
</dbReference>
<dbReference type="PDB" id="5PZ0">
    <property type="method" value="X-ray"/>
    <property type="resolution" value="2.13 A"/>
    <property type="chains" value="A/B=466-508"/>
</dbReference>
<dbReference type="PDB" id="5PZ1">
    <property type="method" value="X-ray"/>
    <property type="resolution" value="2.13 A"/>
    <property type="chains" value="A/B=466-508"/>
</dbReference>
<dbReference type="PDB" id="5PZ2">
    <property type="method" value="X-ray"/>
    <property type="resolution" value="1.88 A"/>
    <property type="chains" value="A/B=466-508"/>
</dbReference>
<dbReference type="PDB" id="5PZ3">
    <property type="method" value="X-ray"/>
    <property type="resolution" value="1.93 A"/>
    <property type="chains" value="A/B=466-508"/>
</dbReference>
<dbReference type="PDB" id="5PZ4">
    <property type="method" value="X-ray"/>
    <property type="resolution" value="1.94 A"/>
    <property type="chains" value="A/B=466-508"/>
</dbReference>
<dbReference type="PDB" id="5PZ5">
    <property type="method" value="X-ray"/>
    <property type="resolution" value="2.64 A"/>
    <property type="chains" value="A/B=466-508"/>
</dbReference>
<dbReference type="PDB" id="5PZ6">
    <property type="method" value="X-ray"/>
    <property type="resolution" value="1.87 A"/>
    <property type="chains" value="A/B=466-508"/>
</dbReference>
<dbReference type="PDB" id="5PZ7">
    <property type="method" value="X-ray"/>
    <property type="resolution" value="1.54 A"/>
    <property type="chains" value="A/B=466-508"/>
</dbReference>
<dbReference type="PDB" id="5PZ8">
    <property type="method" value="X-ray"/>
    <property type="resolution" value="1.52 A"/>
    <property type="chains" value="A/B=466-508"/>
</dbReference>
<dbReference type="PDB" id="5PZ9">
    <property type="method" value="X-ray"/>
    <property type="resolution" value="2.01 A"/>
    <property type="chains" value="A/B=466-508"/>
</dbReference>
<dbReference type="PDB" id="5PZA">
    <property type="method" value="X-ray"/>
    <property type="resolution" value="1.59 A"/>
    <property type="chains" value="A/B=466-508"/>
</dbReference>
<dbReference type="PDB" id="5PZB">
    <property type="method" value="X-ray"/>
    <property type="resolution" value="2.05 A"/>
    <property type="chains" value="A/B=466-508"/>
</dbReference>
<dbReference type="PDB" id="5PZC">
    <property type="method" value="X-ray"/>
    <property type="resolution" value="1.61 A"/>
    <property type="chains" value="A/B=466-508"/>
</dbReference>
<dbReference type="PDB" id="5PZD">
    <property type="method" value="X-ray"/>
    <property type="resolution" value="1.74 A"/>
    <property type="chains" value="A/B=466-508"/>
</dbReference>
<dbReference type="PDB" id="5PZE">
    <property type="method" value="X-ray"/>
    <property type="resolution" value="1.82 A"/>
    <property type="chains" value="A/B=466-508"/>
</dbReference>
<dbReference type="PDB" id="5PZF">
    <property type="method" value="X-ray"/>
    <property type="resolution" value="1.84 A"/>
    <property type="chains" value="A/B=466-508"/>
</dbReference>
<dbReference type="PDB" id="5PZG">
    <property type="method" value="X-ray"/>
    <property type="resolution" value="1.88 A"/>
    <property type="chains" value="A/B=466-508"/>
</dbReference>
<dbReference type="PDB" id="5PZH">
    <property type="method" value="X-ray"/>
    <property type="resolution" value="1.63 A"/>
    <property type="chains" value="A/B=466-508"/>
</dbReference>
<dbReference type="PDB" id="5PZI">
    <property type="method" value="X-ray"/>
    <property type="resolution" value="1.62 A"/>
    <property type="chains" value="A/B=466-508"/>
</dbReference>
<dbReference type="PDB" id="5PZJ">
    <property type="method" value="X-ray"/>
    <property type="resolution" value="1.72 A"/>
    <property type="chains" value="A/B=466-508"/>
</dbReference>
<dbReference type="PDB" id="6G5N">
    <property type="method" value="X-ray"/>
    <property type="resolution" value="1.76 A"/>
    <property type="chains" value="A/B=466-508"/>
</dbReference>
<dbReference type="PDB" id="6G5P">
    <property type="method" value="X-ray"/>
    <property type="resolution" value="1.35 A"/>
    <property type="chains" value="A/B=466-508"/>
</dbReference>
<dbReference type="PDBsum" id="1H5P"/>
<dbReference type="PDBsum" id="4PTB"/>
<dbReference type="PDBsum" id="5FB0"/>
<dbReference type="PDBsum" id="5FB1"/>
<dbReference type="PDBsum" id="5PWE"/>
<dbReference type="PDBsum" id="5PWF"/>
<dbReference type="PDBsum" id="5PWG"/>
<dbReference type="PDBsum" id="5PWH"/>
<dbReference type="PDBsum" id="5PWI"/>
<dbReference type="PDBsum" id="5PWJ"/>
<dbReference type="PDBsum" id="5PWK"/>
<dbReference type="PDBsum" id="5PWL"/>
<dbReference type="PDBsum" id="5PWM"/>
<dbReference type="PDBsum" id="5PWN"/>
<dbReference type="PDBsum" id="5PWO"/>
<dbReference type="PDBsum" id="5PWP"/>
<dbReference type="PDBsum" id="5PWQ"/>
<dbReference type="PDBsum" id="5PWR"/>
<dbReference type="PDBsum" id="5PWS"/>
<dbReference type="PDBsum" id="5PWT"/>
<dbReference type="PDBsum" id="5PWU"/>
<dbReference type="PDBsum" id="5PWV"/>
<dbReference type="PDBsum" id="5PWW"/>
<dbReference type="PDBsum" id="5PWX"/>
<dbReference type="PDBsum" id="5PWY"/>
<dbReference type="PDBsum" id="5PWZ"/>
<dbReference type="PDBsum" id="5PX0"/>
<dbReference type="PDBsum" id="5PX1"/>
<dbReference type="PDBsum" id="5PX2"/>
<dbReference type="PDBsum" id="5PX3"/>
<dbReference type="PDBsum" id="5PX4"/>
<dbReference type="PDBsum" id="5PX5"/>
<dbReference type="PDBsum" id="5PX6"/>
<dbReference type="PDBsum" id="5PX7"/>
<dbReference type="PDBsum" id="5PX8"/>
<dbReference type="PDBsum" id="5PX9"/>
<dbReference type="PDBsum" id="5PXA"/>
<dbReference type="PDBsum" id="5PXB"/>
<dbReference type="PDBsum" id="5PXC"/>
<dbReference type="PDBsum" id="5PXD"/>
<dbReference type="PDBsum" id="5PXE"/>
<dbReference type="PDBsum" id="5PXF"/>
<dbReference type="PDBsum" id="5PXG"/>
<dbReference type="PDBsum" id="5PXH"/>
<dbReference type="PDBsum" id="5PXI"/>
<dbReference type="PDBsum" id="5PXJ"/>
<dbReference type="PDBsum" id="5PXK"/>
<dbReference type="PDBsum" id="5PXL"/>
<dbReference type="PDBsum" id="5PXM"/>
<dbReference type="PDBsum" id="5PXN"/>
<dbReference type="PDBsum" id="5PXO"/>
<dbReference type="PDBsum" id="5PXP"/>
<dbReference type="PDBsum" id="5PXQ"/>
<dbReference type="PDBsum" id="5PXR"/>
<dbReference type="PDBsum" id="5PXS"/>
<dbReference type="PDBsum" id="5PXT"/>
<dbReference type="PDBsum" id="5PXU"/>
<dbReference type="PDBsum" id="5PXV"/>
<dbReference type="PDBsum" id="5PXW"/>
<dbReference type="PDBsum" id="5PXX"/>
<dbReference type="PDBsum" id="5PXY"/>
<dbReference type="PDBsum" id="5PXZ"/>
<dbReference type="PDBsum" id="5PY0"/>
<dbReference type="PDBsum" id="5PY1"/>
<dbReference type="PDBsum" id="5PY2"/>
<dbReference type="PDBsum" id="5PY3"/>
<dbReference type="PDBsum" id="5PY4"/>
<dbReference type="PDBsum" id="5PY5"/>
<dbReference type="PDBsum" id="5PY6"/>
<dbReference type="PDBsum" id="5PY7"/>
<dbReference type="PDBsum" id="5PY8"/>
<dbReference type="PDBsum" id="5PY9"/>
<dbReference type="PDBsum" id="5PYA"/>
<dbReference type="PDBsum" id="5PYB"/>
<dbReference type="PDBsum" id="5PYC"/>
<dbReference type="PDBsum" id="5PYD"/>
<dbReference type="PDBsum" id="5PYE"/>
<dbReference type="PDBsum" id="5PYF"/>
<dbReference type="PDBsum" id="5PYG"/>
<dbReference type="PDBsum" id="5PYH"/>
<dbReference type="PDBsum" id="5PYI"/>
<dbReference type="PDBsum" id="5PYJ"/>
<dbReference type="PDBsum" id="5PYK"/>
<dbReference type="PDBsum" id="5PYL"/>
<dbReference type="PDBsum" id="5PYM"/>
<dbReference type="PDBsum" id="5PYN"/>
<dbReference type="PDBsum" id="5PYO"/>
<dbReference type="PDBsum" id="5PYP"/>
<dbReference type="PDBsum" id="5PYQ"/>
<dbReference type="PDBsum" id="5PYR"/>
<dbReference type="PDBsum" id="5PYS"/>
<dbReference type="PDBsum" id="5PYT"/>
<dbReference type="PDBsum" id="5PYU"/>
<dbReference type="PDBsum" id="5PYV"/>
<dbReference type="PDBsum" id="5PYW"/>
<dbReference type="PDBsum" id="5PYX"/>
<dbReference type="PDBsum" id="5PYY"/>
<dbReference type="PDBsum" id="5PYZ"/>
<dbReference type="PDBsum" id="5PZ0"/>
<dbReference type="PDBsum" id="5PZ1"/>
<dbReference type="PDBsum" id="5PZ2"/>
<dbReference type="PDBsum" id="5PZ3"/>
<dbReference type="PDBsum" id="5PZ4"/>
<dbReference type="PDBsum" id="5PZ5"/>
<dbReference type="PDBsum" id="5PZ6"/>
<dbReference type="PDBsum" id="5PZ7"/>
<dbReference type="PDBsum" id="5PZ8"/>
<dbReference type="PDBsum" id="5PZ9"/>
<dbReference type="PDBsum" id="5PZA"/>
<dbReference type="PDBsum" id="5PZB"/>
<dbReference type="PDBsum" id="5PZC"/>
<dbReference type="PDBsum" id="5PZD"/>
<dbReference type="PDBsum" id="5PZE"/>
<dbReference type="PDBsum" id="5PZF"/>
<dbReference type="PDBsum" id="5PZG"/>
<dbReference type="PDBsum" id="5PZH"/>
<dbReference type="PDBsum" id="5PZI"/>
<dbReference type="PDBsum" id="5PZJ"/>
<dbReference type="PDBsum" id="6G5N"/>
<dbReference type="PDBsum" id="6G5P"/>
<dbReference type="SMR" id="P23497"/>
<dbReference type="BioGRID" id="112555">
    <property type="interactions" value="219"/>
</dbReference>
<dbReference type="DIP" id="DIP-5983N"/>
<dbReference type="FunCoup" id="P23497">
    <property type="interactions" value="1207"/>
</dbReference>
<dbReference type="IntAct" id="P23497">
    <property type="interactions" value="94"/>
</dbReference>
<dbReference type="MINT" id="P23497"/>
<dbReference type="STRING" id="9606.ENSP00000343023"/>
<dbReference type="GlyCosmos" id="P23497">
    <property type="glycosylation" value="3 sites, 2 glycans"/>
</dbReference>
<dbReference type="GlyGen" id="P23497">
    <property type="glycosylation" value="3 sites, 2 O-linked glycans (3 sites)"/>
</dbReference>
<dbReference type="iPTMnet" id="P23497"/>
<dbReference type="PhosphoSitePlus" id="P23497"/>
<dbReference type="SwissPalm" id="P23497"/>
<dbReference type="BioMuta" id="SP100"/>
<dbReference type="DMDM" id="13878931"/>
<dbReference type="jPOST" id="P23497"/>
<dbReference type="MassIVE" id="P23497"/>
<dbReference type="PaxDb" id="9606-ENSP00000343023"/>
<dbReference type="PeptideAtlas" id="P23497"/>
<dbReference type="ProteomicsDB" id="18390"/>
<dbReference type="ProteomicsDB" id="32155"/>
<dbReference type="ProteomicsDB" id="54115">
    <molecule id="P23497-1"/>
</dbReference>
<dbReference type="ProteomicsDB" id="54116">
    <molecule id="P23497-2"/>
</dbReference>
<dbReference type="ProteomicsDB" id="54117">
    <molecule id="P23497-3"/>
</dbReference>
<dbReference type="ProteomicsDB" id="54118">
    <molecule id="P23497-4"/>
</dbReference>
<dbReference type="ProteomicsDB" id="54119">
    <molecule id="P23497-5"/>
</dbReference>
<dbReference type="ProteomicsDB" id="7363"/>
<dbReference type="Pumba" id="P23497"/>
<dbReference type="Antibodypedia" id="20190">
    <property type="antibodies" value="322 antibodies from 32 providers"/>
</dbReference>
<dbReference type="DNASU" id="6672"/>
<dbReference type="Ensembl" id="ENST00000264052.9">
    <molecule id="P23497-1"/>
    <property type="protein sequence ID" value="ENSP00000264052.5"/>
    <property type="gene ID" value="ENSG00000067066.17"/>
</dbReference>
<dbReference type="Ensembl" id="ENST00000340126.9">
    <molecule id="P23497-4"/>
    <property type="protein sequence ID" value="ENSP00000343023.4"/>
    <property type="gene ID" value="ENSG00000067066.17"/>
</dbReference>
<dbReference type="Ensembl" id="ENST00000409112.5">
    <molecule id="P23497-3"/>
    <property type="protein sequence ID" value="ENSP00000386427.1"/>
    <property type="gene ID" value="ENSG00000067066.17"/>
</dbReference>
<dbReference type="Ensembl" id="ENST00000409341.5">
    <molecule id="P23497-2"/>
    <property type="protein sequence ID" value="ENSP00000386404.1"/>
    <property type="gene ID" value="ENSG00000067066.17"/>
</dbReference>
<dbReference type="Ensembl" id="ENST00000409897.5">
    <molecule id="P23497-7"/>
    <property type="protein sequence ID" value="ENSP00000386998.1"/>
    <property type="gene ID" value="ENSG00000067066.17"/>
</dbReference>
<dbReference type="Ensembl" id="ENST00000427101.6">
    <molecule id="P23497-6"/>
    <property type="protein sequence ID" value="ENSP00000399389.2"/>
    <property type="gene ID" value="ENSG00000067066.17"/>
</dbReference>
<dbReference type="GeneID" id="6672"/>
<dbReference type="KEGG" id="hsa:6672"/>
<dbReference type="MANE-Select" id="ENST00000340126.9">
    <molecule id="P23497-4"/>
    <property type="protein sequence ID" value="ENSP00000343023.4"/>
    <property type="RefSeq nucleotide sequence ID" value="NM_001080391.2"/>
    <property type="RefSeq protein sequence ID" value="NP_001073860.1"/>
</dbReference>
<dbReference type="UCSC" id="uc002vqq.3">
    <molecule id="P23497-1"/>
    <property type="organism name" value="human"/>
</dbReference>
<dbReference type="AGR" id="HGNC:11206"/>
<dbReference type="CTD" id="6672"/>
<dbReference type="DisGeNET" id="6672"/>
<dbReference type="GeneCards" id="SP100"/>
<dbReference type="HGNC" id="HGNC:11206">
    <property type="gene designation" value="SP100"/>
</dbReference>
<dbReference type="HPA" id="ENSG00000067066">
    <property type="expression patterns" value="Tissue enhanced (bone)"/>
</dbReference>
<dbReference type="MIM" id="604585">
    <property type="type" value="gene"/>
</dbReference>
<dbReference type="neXtProt" id="NX_P23497"/>
<dbReference type="OpenTargets" id="ENSG00000067066"/>
<dbReference type="PharmGKB" id="PA36043"/>
<dbReference type="VEuPathDB" id="HostDB:ENSG00000067066"/>
<dbReference type="eggNOG" id="KOG2177">
    <property type="taxonomic scope" value="Eukaryota"/>
</dbReference>
<dbReference type="GeneTree" id="ENSGT00940000162212"/>
<dbReference type="HOGENOM" id="CLU_015844_0_0_1"/>
<dbReference type="InParanoid" id="P23497"/>
<dbReference type="OMA" id="KKLAGMW"/>
<dbReference type="OrthoDB" id="9536595at2759"/>
<dbReference type="PAN-GO" id="P23497">
    <property type="GO annotations" value="3 GO annotations based on evolutionary models"/>
</dbReference>
<dbReference type="PhylomeDB" id="P23497"/>
<dbReference type="TreeFam" id="TF335091"/>
<dbReference type="PathwayCommons" id="P23497"/>
<dbReference type="Reactome" id="R-HSA-3108214">
    <property type="pathway name" value="SUMOylation of DNA damage response and repair proteins"/>
</dbReference>
<dbReference type="Reactome" id="R-HSA-877300">
    <property type="pathway name" value="Interferon gamma signaling"/>
</dbReference>
<dbReference type="SignaLink" id="P23497"/>
<dbReference type="SIGNOR" id="P23497"/>
<dbReference type="BioGRID-ORCS" id="6672">
    <property type="hits" value="11 hits in 1190 CRISPR screens"/>
</dbReference>
<dbReference type="CD-CODE" id="B5B9A610">
    <property type="entry name" value="PML body"/>
</dbReference>
<dbReference type="ChiTaRS" id="SP100">
    <property type="organism name" value="human"/>
</dbReference>
<dbReference type="EvolutionaryTrace" id="P23497"/>
<dbReference type="GenomeRNAi" id="6672"/>
<dbReference type="Pharos" id="P23497">
    <property type="development level" value="Tbio"/>
</dbReference>
<dbReference type="PRO" id="PR:P23497"/>
<dbReference type="Proteomes" id="UP000005640">
    <property type="component" value="Chromosome 2"/>
</dbReference>
<dbReference type="RNAct" id="P23497">
    <property type="molecule type" value="protein"/>
</dbReference>
<dbReference type="Bgee" id="ENSG00000067066">
    <property type="expression patterns" value="Expressed in calcaneal tendon and 201 other cell types or tissues"/>
</dbReference>
<dbReference type="ExpressionAtlas" id="P23497">
    <property type="expression patterns" value="baseline and differential"/>
</dbReference>
<dbReference type="GO" id="GO:0000781">
    <property type="term" value="C:chromosome, telomeric region"/>
    <property type="evidence" value="ECO:0007005"/>
    <property type="project" value="BHF-UCL"/>
</dbReference>
<dbReference type="GO" id="GO:0005737">
    <property type="term" value="C:cytoplasm"/>
    <property type="evidence" value="ECO:0000314"/>
    <property type="project" value="BHF-UCL"/>
</dbReference>
<dbReference type="GO" id="GO:0016604">
    <property type="term" value="C:nuclear body"/>
    <property type="evidence" value="ECO:0000314"/>
    <property type="project" value="HPA"/>
</dbReference>
<dbReference type="GO" id="GO:0034399">
    <property type="term" value="C:nuclear periphery"/>
    <property type="evidence" value="ECO:0000314"/>
    <property type="project" value="BHF-UCL"/>
</dbReference>
<dbReference type="GO" id="GO:0005730">
    <property type="term" value="C:nucleolus"/>
    <property type="evidence" value="ECO:0000314"/>
    <property type="project" value="BHF-UCL"/>
</dbReference>
<dbReference type="GO" id="GO:0005654">
    <property type="term" value="C:nucleoplasm"/>
    <property type="evidence" value="ECO:0000314"/>
    <property type="project" value="HPA"/>
</dbReference>
<dbReference type="GO" id="GO:0005634">
    <property type="term" value="C:nucleus"/>
    <property type="evidence" value="ECO:0000314"/>
    <property type="project" value="BHF-UCL"/>
</dbReference>
<dbReference type="GO" id="GO:0016605">
    <property type="term" value="C:PML body"/>
    <property type="evidence" value="ECO:0000314"/>
    <property type="project" value="BHF-UCL"/>
</dbReference>
<dbReference type="GO" id="GO:0070087">
    <property type="term" value="F:chromo shadow domain binding"/>
    <property type="evidence" value="ECO:0000353"/>
    <property type="project" value="BHF-UCL"/>
</dbReference>
<dbReference type="GO" id="GO:0003677">
    <property type="term" value="F:DNA binding"/>
    <property type="evidence" value="ECO:0007669"/>
    <property type="project" value="UniProtKB-KW"/>
</dbReference>
<dbReference type="GO" id="GO:0001228">
    <property type="term" value="F:DNA-binding transcription activator activity, RNA polymerase II-specific"/>
    <property type="evidence" value="ECO:0000314"/>
    <property type="project" value="BHF-UCL"/>
</dbReference>
<dbReference type="GO" id="GO:0000981">
    <property type="term" value="F:DNA-binding transcription factor activity, RNA polymerase II-specific"/>
    <property type="evidence" value="ECO:0000314"/>
    <property type="project" value="BHF-UCL"/>
</dbReference>
<dbReference type="GO" id="GO:0042802">
    <property type="term" value="F:identical protein binding"/>
    <property type="evidence" value="ECO:0000353"/>
    <property type="project" value="IntAct"/>
</dbReference>
<dbReference type="GO" id="GO:0019900">
    <property type="term" value="F:kinase binding"/>
    <property type="evidence" value="ECO:0000353"/>
    <property type="project" value="BHF-UCL"/>
</dbReference>
<dbReference type="GO" id="GO:0046983">
    <property type="term" value="F:protein dimerization activity"/>
    <property type="evidence" value="ECO:0000353"/>
    <property type="project" value="BHF-UCL"/>
</dbReference>
<dbReference type="GO" id="GO:0019904">
    <property type="term" value="F:protein domain specific binding"/>
    <property type="evidence" value="ECO:0000353"/>
    <property type="project" value="UniProtKB"/>
</dbReference>
<dbReference type="GO" id="GO:0042803">
    <property type="term" value="F:protein homodimerization activity"/>
    <property type="evidence" value="ECO:0000353"/>
    <property type="project" value="BHF-UCL"/>
</dbReference>
<dbReference type="GO" id="GO:0061629">
    <property type="term" value="F:RNA polymerase II-specific DNA-binding transcription factor binding"/>
    <property type="evidence" value="ECO:0000353"/>
    <property type="project" value="BHF-UCL"/>
</dbReference>
<dbReference type="GO" id="GO:0003714">
    <property type="term" value="F:transcription corepressor activity"/>
    <property type="evidence" value="ECO:0000314"/>
    <property type="project" value="BHF-UCL"/>
</dbReference>
<dbReference type="GO" id="GO:0030330">
    <property type="term" value="P:DNA damage response, signal transduction by p53 class mediator"/>
    <property type="evidence" value="ECO:0000314"/>
    <property type="project" value="BHF-UCL"/>
</dbReference>
<dbReference type="GO" id="GO:0045185">
    <property type="term" value="P:maintenance of protein location"/>
    <property type="evidence" value="ECO:0000314"/>
    <property type="project" value="BHF-UCL"/>
</dbReference>
<dbReference type="GO" id="GO:0045892">
    <property type="term" value="P:negative regulation of DNA-templated transcription"/>
    <property type="evidence" value="ECO:0000314"/>
    <property type="project" value="BHF-UCL"/>
</dbReference>
<dbReference type="GO" id="GO:0010596">
    <property type="term" value="P:negative regulation of endothelial cell migration"/>
    <property type="evidence" value="ECO:0000315"/>
    <property type="project" value="UniProtKB"/>
</dbReference>
<dbReference type="GO" id="GO:0046826">
    <property type="term" value="P:negative regulation of protein export from nucleus"/>
    <property type="evidence" value="ECO:0000315"/>
    <property type="project" value="UniProtKB"/>
</dbReference>
<dbReference type="GO" id="GO:0000122">
    <property type="term" value="P:negative regulation of transcription by RNA polymerase II"/>
    <property type="evidence" value="ECO:0000314"/>
    <property type="project" value="BHF-UCL"/>
</dbReference>
<dbReference type="GO" id="GO:0032897">
    <property type="term" value="P:negative regulation of viral transcription"/>
    <property type="evidence" value="ECO:0000314"/>
    <property type="project" value="BHF-UCL"/>
</dbReference>
<dbReference type="GO" id="GO:0045944">
    <property type="term" value="P:positive regulation of transcription by RNA polymerase II"/>
    <property type="evidence" value="ECO:0000314"/>
    <property type="project" value="BHF-UCL"/>
</dbReference>
<dbReference type="GO" id="GO:0045765">
    <property type="term" value="P:regulation of angiogenesis"/>
    <property type="evidence" value="ECO:0000315"/>
    <property type="project" value="UniProtKB"/>
</dbReference>
<dbReference type="GO" id="GO:1902041">
    <property type="term" value="P:regulation of extrinsic apoptotic signaling pathway via death domain receptors"/>
    <property type="evidence" value="ECO:0000315"/>
    <property type="project" value="UniProtKB"/>
</dbReference>
<dbReference type="GO" id="GO:1902044">
    <property type="term" value="P:regulation of Fas signaling pathway"/>
    <property type="evidence" value="ECO:0000315"/>
    <property type="project" value="UniProtKB"/>
</dbReference>
<dbReference type="GO" id="GO:0006357">
    <property type="term" value="P:regulation of transcription by RNA polymerase II"/>
    <property type="evidence" value="ECO:0000318"/>
    <property type="project" value="GO_Central"/>
</dbReference>
<dbReference type="GO" id="GO:0034097">
    <property type="term" value="P:response to cytokine"/>
    <property type="evidence" value="ECO:0000314"/>
    <property type="project" value="BHF-UCL"/>
</dbReference>
<dbReference type="GO" id="GO:0032526">
    <property type="term" value="P:response to retinoic acid"/>
    <property type="evidence" value="ECO:0000314"/>
    <property type="project" value="BHF-UCL"/>
</dbReference>
<dbReference type="GO" id="GO:0034340">
    <property type="term" value="P:response to type I interferon"/>
    <property type="evidence" value="ECO:0000314"/>
    <property type="project" value="BHF-UCL"/>
</dbReference>
<dbReference type="GO" id="GO:0034341">
    <property type="term" value="P:response to type II interferon"/>
    <property type="evidence" value="ECO:0000314"/>
    <property type="project" value="BHF-UCL"/>
</dbReference>
<dbReference type="GO" id="GO:0048384">
    <property type="term" value="P:retinoic acid receptor signaling pathway"/>
    <property type="evidence" value="ECO:0000305"/>
    <property type="project" value="BHF-UCL"/>
</dbReference>
<dbReference type="GO" id="GO:0000723">
    <property type="term" value="P:telomere maintenance"/>
    <property type="evidence" value="ECO:0000315"/>
    <property type="project" value="UniProtKB"/>
</dbReference>
<dbReference type="GO" id="GO:0060337">
    <property type="term" value="P:type I interferon-mediated signaling pathway"/>
    <property type="evidence" value="ECO:0000305"/>
    <property type="project" value="BHF-UCL"/>
</dbReference>
<dbReference type="GO" id="GO:0060333">
    <property type="term" value="P:type II interferon-mediated signaling pathway"/>
    <property type="evidence" value="ECO:0000305"/>
    <property type="project" value="BHF-UCL"/>
</dbReference>
<dbReference type="CDD" id="cd21978">
    <property type="entry name" value="HMG-box_HMGB_rpt1"/>
    <property type="match status" value="1"/>
</dbReference>
<dbReference type="CDD" id="cd21979">
    <property type="entry name" value="HMG-box_HMGB_rpt2"/>
    <property type="match status" value="1"/>
</dbReference>
<dbReference type="FunFam" id="1.10.30.10:FF:000015">
    <property type="entry name" value="high mobility group protein B1"/>
    <property type="match status" value="1"/>
</dbReference>
<dbReference type="FunFam" id="1.10.30.10:FF:000050">
    <property type="entry name" value="Nuclear autoantigen Sp-100"/>
    <property type="match status" value="1"/>
</dbReference>
<dbReference type="FunFam" id="3.10.390.10:FF:000005">
    <property type="entry name" value="SP140 nuclear body protein"/>
    <property type="match status" value="1"/>
</dbReference>
<dbReference type="Gene3D" id="1.10.30.10">
    <property type="entry name" value="High mobility group box domain"/>
    <property type="match status" value="2"/>
</dbReference>
<dbReference type="Gene3D" id="3.10.390.10">
    <property type="entry name" value="SAND domain-like"/>
    <property type="match status" value="1"/>
</dbReference>
<dbReference type="InterPro" id="IPR009071">
    <property type="entry name" value="HMG_box_dom"/>
</dbReference>
<dbReference type="InterPro" id="IPR036910">
    <property type="entry name" value="HMG_box_dom_sf"/>
</dbReference>
<dbReference type="InterPro" id="IPR004865">
    <property type="entry name" value="HSR_dom"/>
</dbReference>
<dbReference type="InterPro" id="IPR010919">
    <property type="entry name" value="SAND-like_dom_sf"/>
</dbReference>
<dbReference type="InterPro" id="IPR000770">
    <property type="entry name" value="SAND_dom"/>
</dbReference>
<dbReference type="InterPro" id="IPR043563">
    <property type="entry name" value="Sp110/Sp140/Sp140L-like"/>
</dbReference>
<dbReference type="PANTHER" id="PTHR46386:SF12">
    <property type="entry name" value="NUCLEAR AUTOANTIGEN SP-100"/>
    <property type="match status" value="1"/>
</dbReference>
<dbReference type="PANTHER" id="PTHR46386">
    <property type="entry name" value="NUCLEAR BODY PROTEIN SP140"/>
    <property type="match status" value="1"/>
</dbReference>
<dbReference type="Pfam" id="PF00505">
    <property type="entry name" value="HMG_box"/>
    <property type="match status" value="1"/>
</dbReference>
<dbReference type="Pfam" id="PF09011">
    <property type="entry name" value="HMG_box_2"/>
    <property type="match status" value="1"/>
</dbReference>
<dbReference type="Pfam" id="PF03172">
    <property type="entry name" value="HSR"/>
    <property type="match status" value="1"/>
</dbReference>
<dbReference type="Pfam" id="PF01342">
    <property type="entry name" value="SAND"/>
    <property type="match status" value="1"/>
</dbReference>
<dbReference type="PRINTS" id="PR00886">
    <property type="entry name" value="HIGHMOBLTY12"/>
</dbReference>
<dbReference type="SMART" id="SM00398">
    <property type="entry name" value="HMG"/>
    <property type="match status" value="2"/>
</dbReference>
<dbReference type="SMART" id="SM00258">
    <property type="entry name" value="SAND"/>
    <property type="match status" value="1"/>
</dbReference>
<dbReference type="SUPFAM" id="SSF47095">
    <property type="entry name" value="HMG-box"/>
    <property type="match status" value="2"/>
</dbReference>
<dbReference type="SUPFAM" id="SSF63763">
    <property type="entry name" value="SAND domain-like"/>
    <property type="match status" value="1"/>
</dbReference>
<dbReference type="PROSITE" id="PS50118">
    <property type="entry name" value="HMG_BOX_2"/>
    <property type="match status" value="2"/>
</dbReference>
<dbReference type="PROSITE" id="PS51414">
    <property type="entry name" value="HSR"/>
    <property type="match status" value="1"/>
</dbReference>
<dbReference type="PROSITE" id="PS50864">
    <property type="entry name" value="SAND"/>
    <property type="match status" value="1"/>
</dbReference>
<comment type="function">
    <text evidence="9 11 12 13 14 16 17 18 19">Together with PML, this tumor suppressor is a major constituent of the PML bodies, a subnuclear organelle involved in a large number of physiological processes including cell growth, differentiation and apoptosis. Functions as a transcriptional coactivator of ETS1 and ETS2 according to PubMed:11909962. Under certain conditions, it may also act as a corepressor of ETS1 preventing its binding to DNA according to PubMed:15247905. Through the regulation of ETS1 it may play a role in angiogenesis, controlling endothelial cell motility and invasion. Through interaction with the MRN complex it may be involved in the regulation of telomeres lengthening. May also regulate TP53-mediated transcription and through CASP8AP2, regulate FAS-mediated apoptosis. Also plays a role in infection by viruses, including human cytomegalovirus and Epstein-Barr virus, through mechanisms that may involve chromatin and/or transcriptional regulation.</text>
</comment>
<comment type="subunit">
    <text evidence="8 9 10 11 12 14 15 17 22">Homodimer; isoforms are able to heterodimerize. Interacts with members of the HP1 family of nonhistone chromosomal protein, such as CBX5 and CBX3 via the PxVxL motif. Interacts with ETS1; the interaction is direct and modulates ETS1 transcriptional activity. Interacts with the MRN complex which is composed of two heterodimers RAD50/MRE11 associated with a single NBN; recruits the complex to PML-related bodies. Interacts with HIPK2; positively regulates TP53-dependent transcription. Interacts with CASP8AP2; may negatively regulate CASP8AP2 export from the nucleus to the cytoplasm. Interacts with SUMO1P1/SUMO5 (PubMed:27211601).</text>
</comment>
<comment type="subunit">
    <text evidence="16">(Microbial infection) Interacts with Epstein-Barr virus EBNA-LP; this interaction is important for EBNA-LP coactivator activity.</text>
</comment>
<comment type="subunit">
    <text evidence="19">(Microbial infection) Interacts with human cytomegalovirus/HHV-5 protein UL123; may play a role in infection by the virus.</text>
</comment>
<comment type="interaction">
    <interactant intactId="EBI-751145">
        <id>P23497</id>
    </interactant>
    <interactant intactId="EBI-77797">
        <id>P35609</id>
        <label>ACTN2</label>
    </interactant>
    <organismsDiffer>false</organismsDiffer>
    <experiments>6</experiments>
</comment>
<comment type="interaction">
    <interactant intactId="EBI-751145">
        <id>P23497</id>
    </interactant>
    <interactant intactId="EBI-10187270">
        <id>Q9Y2J4-4</id>
        <label>AMOTL2</label>
    </interactant>
    <organismsDiffer>false</organismsDiffer>
    <experiments>3</experiments>
</comment>
<comment type="interaction">
    <interactant intactId="EBI-751145">
        <id>P23497</id>
    </interactant>
    <interactant intactId="EBI-2339650">
        <id>Q9UKL3</id>
        <label>CASP8AP2</label>
    </interactant>
    <organismsDiffer>false</organismsDiffer>
    <experiments>5</experiments>
</comment>
<comment type="interaction">
    <interactant intactId="EBI-751145">
        <id>P23497</id>
    </interactant>
    <interactant intactId="EBI-923653">
        <id>Q9Y6K1</id>
        <label>DNMT3A</label>
    </interactant>
    <organismsDiffer>false</organismsDiffer>
    <experiments>3</experiments>
</comment>
<comment type="interaction">
    <interactant intactId="EBI-751145">
        <id>P23497</id>
    </interactant>
    <interactant intactId="EBI-749432">
        <id>Q92630</id>
        <label>DYRK2</label>
    </interactant>
    <organismsDiffer>false</organismsDiffer>
    <experiments>3</experiments>
</comment>
<comment type="interaction">
    <interactant intactId="EBI-751145">
        <id>P23497</id>
    </interactant>
    <interactant intactId="EBI-913209">
        <id>P14921</id>
        <label>ETS1</label>
    </interactant>
    <organismsDiffer>false</organismsDiffer>
    <experiments>4</experiments>
</comment>
<comment type="interaction">
    <interactant intactId="EBI-751145">
        <id>P23497</id>
    </interactant>
    <interactant intactId="EBI-712067">
        <id>Q8TF65</id>
        <label>GIPC2</label>
    </interactant>
    <organismsDiffer>false</organismsDiffer>
    <experiments>4</experiments>
</comment>
<comment type="interaction">
    <interactant intactId="EBI-751145">
        <id>P23497</id>
    </interactant>
    <interactant intactId="EBI-10183977">
        <id>V9HWG0</id>
        <label>HEL25</label>
    </interactant>
    <organismsDiffer>false</organismsDiffer>
    <experiments>3</experiments>
</comment>
<comment type="interaction">
    <interactant intactId="EBI-751145">
        <id>P23497</id>
    </interactant>
    <interactant intactId="EBI-2686809">
        <id>Q96JM7</id>
        <label>L3MBTL3</label>
    </interactant>
    <organismsDiffer>false</organismsDiffer>
    <experiments>3</experiments>
</comment>
<comment type="interaction">
    <interactant intactId="EBI-751145">
        <id>P23497</id>
    </interactant>
    <interactant intactId="EBI-6654703">
        <id>Q14498-3</id>
        <label>RBM39</label>
    </interactant>
    <organismsDiffer>false</organismsDiffer>
    <experiments>3</experiments>
</comment>
<comment type="interaction">
    <interactant intactId="EBI-751145">
        <id>P23497</id>
    </interactant>
    <interactant intactId="EBI-10217913">
        <id>Q14D33</id>
        <label>RTP5</label>
    </interactant>
    <organismsDiffer>false</organismsDiffer>
    <experiments>3</experiments>
</comment>
<comment type="interaction">
    <interactant intactId="EBI-751145">
        <id>P23497</id>
    </interactant>
    <interactant intactId="EBI-80140">
        <id>P63165</id>
        <label>SUMO1</label>
    </interactant>
    <organismsDiffer>false</organismsDiffer>
    <experiments>6</experiments>
</comment>
<comment type="interaction">
    <interactant intactId="EBI-751145">
        <id>P23497</id>
    </interactant>
    <interactant intactId="EBI-474067">
        <id>P55854</id>
        <label>SUMO3</label>
    </interactant>
    <organismsDiffer>false</organismsDiffer>
    <experiments>2</experiments>
</comment>
<comment type="interaction">
    <interactant intactId="EBI-751145">
        <id>P23497</id>
    </interactant>
    <interactant intactId="EBI-765817">
        <id>Q9Y228</id>
        <label>TRAF3IP3</label>
    </interactant>
    <organismsDiffer>false</organismsDiffer>
    <experiments>4</experiments>
</comment>
<comment type="interaction">
    <interactant intactId="EBI-751145">
        <id>P23497</id>
    </interactant>
    <interactant intactId="EBI-5458880">
        <id>Q96GY0</id>
        <label>ZC2HC1A</label>
    </interactant>
    <organismsDiffer>false</organismsDiffer>
    <experiments>3</experiments>
</comment>
<comment type="interaction">
    <interactant intactId="EBI-751145">
        <id>P23497</id>
    </interactant>
    <interactant intactId="EBI-10243413">
        <id>Q59GP6</id>
    </interactant>
    <organismsDiffer>false</organismsDiffer>
    <experiments>3</experiments>
</comment>
<comment type="interaction">
    <interactant intactId="EBI-751145">
        <id>P23497</id>
    </interactant>
    <interactant intactId="EBI-25475877">
        <id>PRO_0000449627</id>
        <label>rep</label>
        <dbReference type="UniProtKB" id="P0DTD1"/>
    </interactant>
    <organismsDiffer>true</organismsDiffer>
    <experiments>3</experiments>
</comment>
<comment type="interaction">
    <interactant intactId="EBI-751145">
        <id>P23497</id>
    </interactant>
    <interactant intactId="EBI-6691147">
        <id>P03169</id>
        <label>UL123</label>
    </interactant>
    <organismsDiffer>true</organismsDiffer>
    <experiments>4</experiments>
</comment>
<comment type="interaction">
    <interactant intactId="EBI-6589365">
        <id>P23497-2</id>
    </interactant>
    <interactant intactId="EBI-77797">
        <id>P35609</id>
        <label>ACTN2</label>
    </interactant>
    <organismsDiffer>false</organismsDiffer>
    <experiments>3</experiments>
</comment>
<comment type="interaction">
    <interactant intactId="EBI-6589365">
        <id>P23497-2</id>
    </interactant>
    <interactant intactId="EBI-78129">
        <id>P83916</id>
        <label>CBX1</label>
    </interactant>
    <organismsDiffer>false</organismsDiffer>
    <experiments>3</experiments>
</comment>
<comment type="interaction">
    <interactant intactId="EBI-6589365">
        <id>P23497-2</id>
    </interactant>
    <interactant intactId="EBI-78176">
        <id>Q13185</id>
        <label>CBX3</label>
    </interactant>
    <organismsDiffer>false</organismsDiffer>
    <experiments>3</experiments>
</comment>
<comment type="interaction">
    <interactant intactId="EBI-6589365">
        <id>P23497-2</id>
    </interactant>
    <interactant intactId="EBI-78219">
        <id>P45973</id>
        <label>CBX5</label>
    </interactant>
    <organismsDiffer>false</organismsDiffer>
    <experiments>7</experiments>
</comment>
<comment type="interaction">
    <interactant intactId="EBI-6589365">
        <id>P23497-2</id>
    </interactant>
    <interactant intactId="EBI-712067">
        <id>Q8TF65</id>
        <label>GIPC2</label>
    </interactant>
    <organismsDiffer>false</organismsDiffer>
    <experiments>3</experiments>
</comment>
<comment type="interaction">
    <interactant intactId="EBI-6589365">
        <id>P23497-2</id>
    </interactant>
    <interactant intactId="EBI-5452779">
        <id>Q9BUI4</id>
        <label>POLR3C</label>
    </interactant>
    <organismsDiffer>false</organismsDiffer>
    <experiments>3</experiments>
</comment>
<comment type="interaction">
    <interactant intactId="EBI-6589365">
        <id>P23497-2</id>
    </interactant>
    <interactant intactId="EBI-10217913">
        <id>Q14D33</id>
        <label>RTP5</label>
    </interactant>
    <organismsDiffer>false</organismsDiffer>
    <experiments>3</experiments>
</comment>
<comment type="interaction">
    <interactant intactId="EBI-6589365">
        <id>P23497-2</id>
    </interactant>
    <interactant intactId="EBI-985879">
        <id>P37840</id>
        <label>SNCA</label>
    </interactant>
    <organismsDiffer>false</organismsDiffer>
    <experiments>3</experiments>
</comment>
<comment type="interaction">
    <interactant intactId="EBI-6589365">
        <id>P23497-2</id>
    </interactant>
    <interactant intactId="EBI-6589365">
        <id>P23497-2</id>
        <label>SP100</label>
    </interactant>
    <organismsDiffer>false</organismsDiffer>
    <experiments>5</experiments>
</comment>
<comment type="interaction">
    <interactant intactId="EBI-6589365">
        <id>P23497-2</id>
    </interactant>
    <interactant intactId="EBI-80140">
        <id>P63165</id>
        <label>SUMO1</label>
    </interactant>
    <organismsDiffer>false</organismsDiffer>
    <experiments>3</experiments>
</comment>
<comment type="interaction">
    <interactant intactId="EBI-6589365">
        <id>P23497-2</id>
    </interactant>
    <interactant intactId="EBI-473220">
        <id>P61956</id>
        <label>SUMO2</label>
    </interactant>
    <organismsDiffer>false</organismsDiffer>
    <experiments>3</experiments>
</comment>
<comment type="interaction">
    <interactant intactId="EBI-6589365">
        <id>P23497-2</id>
    </interactant>
    <interactant intactId="EBI-765817">
        <id>Q9Y228</id>
        <label>TRAF3IP3</label>
    </interactant>
    <organismsDiffer>false</organismsDiffer>
    <experiments>3</experiments>
</comment>
<comment type="subcellular location">
    <subcellularLocation>
        <location evidence="21">Nucleus</location>
    </subcellularLocation>
    <subcellularLocation>
        <location evidence="22">Nucleus</location>
        <location evidence="22">PML body</location>
    </subcellularLocation>
    <subcellularLocation>
        <location evidence="17">Nucleus</location>
        <location evidence="17">Nuclear body</location>
    </subcellularLocation>
    <subcellularLocation>
        <location evidence="17">Cytoplasm</location>
    </subcellularLocation>
    <text evidence="17">Differences in the subnuclear localization of the different isoforms seem to exist and may also be cell cycle- and interferon-dependent. Accumulates in the cytoplasm upon FAS activation.</text>
</comment>
<comment type="subcellular location">
    <molecule>Isoform Sp100-C</molecule>
    <subcellularLocation>
        <location evidence="8">Nucleus</location>
    </subcellularLocation>
    <text>Forms a reticulate or track-like nuclear pattern with denser concentrations at the nuclear lamina and surrounding the nucleoli, a pattern reminiscent of heterochromatin-rich regions according to PubMed:11313457.</text>
</comment>
<comment type="alternative products">
    <event type="alternative splicing"/>
    <isoform>
        <id>P23497-1</id>
        <name>Sp100-HMG</name>
        <name>SP100HMG</name>
        <name>SpAlt-HMG</name>
        <sequence type="displayed"/>
    </isoform>
    <isoform>
        <id>P23497-2</id>
        <name>Sp100-A</name>
        <name>SP100A</name>
        <name>SP100</name>
        <sequence type="described" ref="VSP_005978 VSP_005979"/>
    </isoform>
    <isoform>
        <id>P23497-3</id>
        <name>Sp100-B</name>
        <name>SP100B</name>
        <name>SpAlt-212</name>
        <sequence type="described" ref="VSP_005980 VSP_005981"/>
    </isoform>
    <isoform>
        <id>P23497-4</id>
        <name>Sp100-C</name>
        <name>SP100C</name>
        <sequence type="described" ref="VSP_005984"/>
    </isoform>
    <isoform>
        <id>P23497-5</id>
        <name>SpAlt-C</name>
        <sequence type="described" ref="VSP_005982 VSP_005983"/>
    </isoform>
    <isoform>
        <id>P23497-6</id>
        <name>6</name>
        <sequence type="described" ref="VSP_045869 VSP_045870 VSP_005978 VSP_005979"/>
    </isoform>
    <isoform>
        <id>P23497-7</id>
        <name>7</name>
        <sequence type="described" ref="VSP_045868 VSP_005978 VSP_005979"/>
    </isoform>
</comment>
<comment type="tissue specificity">
    <text>Widely expressed. Sp100-B is expressed only in spleen, tonsil, thymus, mature B-cell line and some T-cell line, but not in brain, liver, muscle or non-lymphoid cell lines.</text>
</comment>
<comment type="induction">
    <text evidence="12 13 19">Up-regulated by interferon, retinoic acid, TNF-alpha/TNFA and lipopolysaccharide (at protein level). Up-regulated following heat-shock.</text>
</comment>
<comment type="domain">
    <text evidence="20">The HSR domain is important for the nuclear body targeting as well as for the dimerization.</text>
</comment>
<comment type="domain">
    <text evidence="20">Contains one Pro-Xaa-Val-Xaa-Leu (PxVxL) motif, which is required for interaction with chromoshadow domains. This motif requires additional residues -7, -6, +4 and +5 of the central Val which contact the chromoshadow domain.</text>
</comment>
<comment type="PTM">
    <text>Sumoylated. Sumoylation depends on a functional nuclear localization signal but is not necessary for nuclear import or nuclear body targeting.</text>
</comment>
<comment type="PTM">
    <text>Sumoylated. Sumoylated with SUMO1. Sumoylation depends on a functional nuclear localization signal but is not necessary for nuclear import or nuclear body targeting. Sumoylation may stabilize the interaction with CBX5.</text>
</comment>
<comment type="PTM">
    <text evidence="7">(Microbial infection) Immediate early protein IE1 of human cytomegalovirus (HHV-5) interferes with the sumoylation of SP100.</text>
</comment>
<comment type="miscellaneous">
    <text>The major isoform Sp100-A, has a calculated molecular weight of 54 kDa, but exhibits aberrant electrophoretic mobilities, with an apparent molecular weight of 100 kDa.</text>
</comment>
<comment type="miscellaneous">
    <molecule>Isoform Sp100-A</molecule>
    <text evidence="28">Major isoform.</text>
</comment>
<reference key="1">
    <citation type="journal article" date="1990" name="J. Immunol.">
        <title>Isolation and characterization of cDNA encoding a human nuclear antigen predominantly recognized by autoantibodies from patients with primary biliary cirrhosis.</title>
        <authorList>
            <person name="Szostecki C."/>
            <person name="Guldner H.H."/>
            <person name="Netter H.J."/>
            <person name="Will H."/>
        </authorList>
    </citation>
    <scope>NUCLEOTIDE SEQUENCE [MRNA] (ISOFORM SP100-A)</scope>
    <source>
        <tissue>Liver</tissue>
        <tissue>Placenta</tissue>
    </source>
</reference>
<reference key="2">
    <citation type="journal article" date="1996" name="Blood">
        <title>LYSP100-associated nuclear domains (LANDs): description of a new class of subnuclear structures and their relationship to PML nuclear bodies.</title>
        <authorList>
            <person name="Dent A.L."/>
            <person name="Yewdell J."/>
            <person name="Puvion-Dutilleul F."/>
            <person name="Koken M.H.M."/>
            <person name="de The H."/>
            <person name="Staudt L.M."/>
        </authorList>
    </citation>
    <scope>NUCLEOTIDE SEQUENCE [MRNA] (ISOFORM SP100-B)</scope>
</reference>
<reference key="3">
    <citation type="journal article" date="1998" name="Proc. Natl. Acad. Sci. U.S.A.">
        <title>Interaction of SP100 with HP1 proteins: a link between the promyelocytic leukemia-associated nuclear bodies and the chromatin compartment.</title>
        <authorList>
            <person name="Seeler J.-S."/>
            <person name="Marchio A."/>
            <person name="Sitterlin D."/>
            <person name="Transy C."/>
            <person name="Dejean A."/>
        </authorList>
    </citation>
    <scope>NUCLEOTIDE SEQUENCE [MRNA] (ISOFORM SP100-HMG)</scope>
    <source>
        <tissue>Mammary cancer</tissue>
    </source>
</reference>
<reference key="4">
    <citation type="journal article" date="2001" name="Mol. Cell. Biol.">
        <title>Common properties of nuclear protein SP100 and TIF1alpha chromatin factor: role of SUMO modification.</title>
        <authorList>
            <person name="Seeler J.-S."/>
            <person name="Marchio A."/>
            <person name="Losson R."/>
            <person name="Desterro J.M.P."/>
            <person name="Hay R.T."/>
            <person name="Chambon P."/>
            <person name="Dejean A."/>
        </authorList>
    </citation>
    <scope>NUCLEOTIDE SEQUENCE [MRNA] (ISOFORM SP100-C)</scope>
    <scope>SUBCELLULAR LOCATION (ISOFORMS SP100-A; SP100-C AND SP100-HMG)</scope>
    <scope>SUMOYLATION WITH SUMO1</scope>
    <scope>INTERACTION WITH CBX5</scope>
</reference>
<reference key="5">
    <citation type="journal article" date="2004" name="Nat. Genet.">
        <title>Complete sequencing and characterization of 21,243 full-length human cDNAs.</title>
        <authorList>
            <person name="Ota T."/>
            <person name="Suzuki Y."/>
            <person name="Nishikawa T."/>
            <person name="Otsuki T."/>
            <person name="Sugiyama T."/>
            <person name="Irie R."/>
            <person name="Wakamatsu A."/>
            <person name="Hayashi K."/>
            <person name="Sato H."/>
            <person name="Nagai K."/>
            <person name="Kimura K."/>
            <person name="Makita H."/>
            <person name="Sekine M."/>
            <person name="Obayashi M."/>
            <person name="Nishi T."/>
            <person name="Shibahara T."/>
            <person name="Tanaka T."/>
            <person name="Ishii S."/>
            <person name="Yamamoto J."/>
            <person name="Saito K."/>
            <person name="Kawai Y."/>
            <person name="Isono Y."/>
            <person name="Nakamura Y."/>
            <person name="Nagahari K."/>
            <person name="Murakami K."/>
            <person name="Yasuda T."/>
            <person name="Iwayanagi T."/>
            <person name="Wagatsuma M."/>
            <person name="Shiratori A."/>
            <person name="Sudo H."/>
            <person name="Hosoiri T."/>
            <person name="Kaku Y."/>
            <person name="Kodaira H."/>
            <person name="Kondo H."/>
            <person name="Sugawara M."/>
            <person name="Takahashi M."/>
            <person name="Kanda K."/>
            <person name="Yokoi T."/>
            <person name="Furuya T."/>
            <person name="Kikkawa E."/>
            <person name="Omura Y."/>
            <person name="Abe K."/>
            <person name="Kamihara K."/>
            <person name="Katsuta N."/>
            <person name="Sato K."/>
            <person name="Tanikawa M."/>
            <person name="Yamazaki M."/>
            <person name="Ninomiya K."/>
            <person name="Ishibashi T."/>
            <person name="Yamashita H."/>
            <person name="Murakawa K."/>
            <person name="Fujimori K."/>
            <person name="Tanai H."/>
            <person name="Kimata M."/>
            <person name="Watanabe M."/>
            <person name="Hiraoka S."/>
            <person name="Chiba Y."/>
            <person name="Ishida S."/>
            <person name="Ono Y."/>
            <person name="Takiguchi S."/>
            <person name="Watanabe S."/>
            <person name="Yosida M."/>
            <person name="Hotuta T."/>
            <person name="Kusano J."/>
            <person name="Kanehori K."/>
            <person name="Takahashi-Fujii A."/>
            <person name="Hara H."/>
            <person name="Tanase T.-O."/>
            <person name="Nomura Y."/>
            <person name="Togiya S."/>
            <person name="Komai F."/>
            <person name="Hara R."/>
            <person name="Takeuchi K."/>
            <person name="Arita M."/>
            <person name="Imose N."/>
            <person name="Musashino K."/>
            <person name="Yuuki H."/>
            <person name="Oshima A."/>
            <person name="Sasaki N."/>
            <person name="Aotsuka S."/>
            <person name="Yoshikawa Y."/>
            <person name="Matsunawa H."/>
            <person name="Ichihara T."/>
            <person name="Shiohata N."/>
            <person name="Sano S."/>
            <person name="Moriya S."/>
            <person name="Momiyama H."/>
            <person name="Satoh N."/>
            <person name="Takami S."/>
            <person name="Terashima Y."/>
            <person name="Suzuki O."/>
            <person name="Nakagawa S."/>
            <person name="Senoh A."/>
            <person name="Mizoguchi H."/>
            <person name="Goto Y."/>
            <person name="Shimizu F."/>
            <person name="Wakebe H."/>
            <person name="Hishigaki H."/>
            <person name="Watanabe T."/>
            <person name="Sugiyama A."/>
            <person name="Takemoto M."/>
            <person name="Kawakami B."/>
            <person name="Yamazaki M."/>
            <person name="Watanabe K."/>
            <person name="Kumagai A."/>
            <person name="Itakura S."/>
            <person name="Fukuzumi Y."/>
            <person name="Fujimori Y."/>
            <person name="Komiyama M."/>
            <person name="Tashiro H."/>
            <person name="Tanigami A."/>
            <person name="Fujiwara T."/>
            <person name="Ono T."/>
            <person name="Yamada K."/>
            <person name="Fujii Y."/>
            <person name="Ozaki K."/>
            <person name="Hirao M."/>
            <person name="Ohmori Y."/>
            <person name="Kawabata A."/>
            <person name="Hikiji T."/>
            <person name="Kobatake N."/>
            <person name="Inagaki H."/>
            <person name="Ikema Y."/>
            <person name="Okamoto S."/>
            <person name="Okitani R."/>
            <person name="Kawakami T."/>
            <person name="Noguchi S."/>
            <person name="Itoh T."/>
            <person name="Shigeta K."/>
            <person name="Senba T."/>
            <person name="Matsumura K."/>
            <person name="Nakajima Y."/>
            <person name="Mizuno T."/>
            <person name="Morinaga M."/>
            <person name="Sasaki M."/>
            <person name="Togashi T."/>
            <person name="Oyama M."/>
            <person name="Hata H."/>
            <person name="Watanabe M."/>
            <person name="Komatsu T."/>
            <person name="Mizushima-Sugano J."/>
            <person name="Satoh T."/>
            <person name="Shirai Y."/>
            <person name="Takahashi Y."/>
            <person name="Nakagawa K."/>
            <person name="Okumura K."/>
            <person name="Nagase T."/>
            <person name="Nomura N."/>
            <person name="Kikuchi H."/>
            <person name="Masuho Y."/>
            <person name="Yamashita R."/>
            <person name="Nakai K."/>
            <person name="Yada T."/>
            <person name="Nakamura Y."/>
            <person name="Ohara O."/>
            <person name="Isogai T."/>
            <person name="Sugano S."/>
        </authorList>
    </citation>
    <scope>NUCLEOTIDE SEQUENCE [LARGE SCALE MRNA] (ISOFORMS 6 AND 7)</scope>
    <source>
        <tissue>Kidney</tissue>
        <tissue>Urinary bladder</tissue>
    </source>
</reference>
<reference key="6">
    <citation type="journal article" date="2005" name="Nature">
        <title>Generation and annotation of the DNA sequences of human chromosomes 2 and 4.</title>
        <authorList>
            <person name="Hillier L.W."/>
            <person name="Graves T.A."/>
            <person name="Fulton R.S."/>
            <person name="Fulton L.A."/>
            <person name="Pepin K.H."/>
            <person name="Minx P."/>
            <person name="Wagner-McPherson C."/>
            <person name="Layman D."/>
            <person name="Wylie K."/>
            <person name="Sekhon M."/>
            <person name="Becker M.C."/>
            <person name="Fewell G.A."/>
            <person name="Delehaunty K.D."/>
            <person name="Miner T.L."/>
            <person name="Nash W.E."/>
            <person name="Kremitzki C."/>
            <person name="Oddy L."/>
            <person name="Du H."/>
            <person name="Sun H."/>
            <person name="Bradshaw-Cordum H."/>
            <person name="Ali J."/>
            <person name="Carter J."/>
            <person name="Cordes M."/>
            <person name="Harris A."/>
            <person name="Isak A."/>
            <person name="van Brunt A."/>
            <person name="Nguyen C."/>
            <person name="Du F."/>
            <person name="Courtney L."/>
            <person name="Kalicki J."/>
            <person name="Ozersky P."/>
            <person name="Abbott S."/>
            <person name="Armstrong J."/>
            <person name="Belter E.A."/>
            <person name="Caruso L."/>
            <person name="Cedroni M."/>
            <person name="Cotton M."/>
            <person name="Davidson T."/>
            <person name="Desai A."/>
            <person name="Elliott G."/>
            <person name="Erb T."/>
            <person name="Fronick C."/>
            <person name="Gaige T."/>
            <person name="Haakenson W."/>
            <person name="Haglund K."/>
            <person name="Holmes A."/>
            <person name="Harkins R."/>
            <person name="Kim K."/>
            <person name="Kruchowski S.S."/>
            <person name="Strong C.M."/>
            <person name="Grewal N."/>
            <person name="Goyea E."/>
            <person name="Hou S."/>
            <person name="Levy A."/>
            <person name="Martinka S."/>
            <person name="Mead K."/>
            <person name="McLellan M.D."/>
            <person name="Meyer R."/>
            <person name="Randall-Maher J."/>
            <person name="Tomlinson C."/>
            <person name="Dauphin-Kohlberg S."/>
            <person name="Kozlowicz-Reilly A."/>
            <person name="Shah N."/>
            <person name="Swearengen-Shahid S."/>
            <person name="Snider J."/>
            <person name="Strong J.T."/>
            <person name="Thompson J."/>
            <person name="Yoakum M."/>
            <person name="Leonard S."/>
            <person name="Pearman C."/>
            <person name="Trani L."/>
            <person name="Radionenko M."/>
            <person name="Waligorski J.E."/>
            <person name="Wang C."/>
            <person name="Rock S.M."/>
            <person name="Tin-Wollam A.-M."/>
            <person name="Maupin R."/>
            <person name="Latreille P."/>
            <person name="Wendl M.C."/>
            <person name="Yang S.-P."/>
            <person name="Pohl C."/>
            <person name="Wallis J.W."/>
            <person name="Spieth J."/>
            <person name="Bieri T.A."/>
            <person name="Berkowicz N."/>
            <person name="Nelson J.O."/>
            <person name="Osborne J."/>
            <person name="Ding L."/>
            <person name="Meyer R."/>
            <person name="Sabo A."/>
            <person name="Shotland Y."/>
            <person name="Sinha P."/>
            <person name="Wohldmann P.E."/>
            <person name="Cook L.L."/>
            <person name="Hickenbotham M.T."/>
            <person name="Eldred J."/>
            <person name="Williams D."/>
            <person name="Jones T.A."/>
            <person name="She X."/>
            <person name="Ciccarelli F.D."/>
            <person name="Izaurralde E."/>
            <person name="Taylor J."/>
            <person name="Schmutz J."/>
            <person name="Myers R.M."/>
            <person name="Cox D.R."/>
            <person name="Huang X."/>
            <person name="McPherson J.D."/>
            <person name="Mardis E.R."/>
            <person name="Clifton S.W."/>
            <person name="Warren W.C."/>
            <person name="Chinwalla A.T."/>
            <person name="Eddy S.R."/>
            <person name="Marra M.A."/>
            <person name="Ovcharenko I."/>
            <person name="Furey T.S."/>
            <person name="Miller W."/>
            <person name="Eichler E.E."/>
            <person name="Bork P."/>
            <person name="Suyama M."/>
            <person name="Torrents D."/>
            <person name="Waterston R.H."/>
            <person name="Wilson R.K."/>
        </authorList>
    </citation>
    <scope>NUCLEOTIDE SEQUENCE [LARGE SCALE GENOMIC DNA]</scope>
</reference>
<reference key="7">
    <citation type="journal article" date="2004" name="Genome Res.">
        <title>The status, quality, and expansion of the NIH full-length cDNA project: the Mammalian Gene Collection (MGC).</title>
        <authorList>
            <consortium name="The MGC Project Team"/>
        </authorList>
    </citation>
    <scope>NUCLEOTIDE SEQUENCE [LARGE SCALE MRNA] (ISOFORM SP100-A)</scope>
    <source>
        <tissue>Kidney</tissue>
    </source>
</reference>
<reference key="8">
    <citation type="journal article" date="1996" name="J. Biol. Chem.">
        <title>The interferon (IFN)-stimulated gene Sp100 promoter contains an IFN-gamma activation site and an imperfect IFN-stimulated response element which mediate type I IFN inducibility.</title>
        <authorList>
            <person name="Groetzinger T."/>
            <person name="Jensen K."/>
            <person name="Will H."/>
        </authorList>
    </citation>
    <scope>NUCLEOTIDE SEQUENCE [GENOMIC DNA] OF 1-10</scope>
    <source>
        <tissue>Lymphoma</tissue>
    </source>
</reference>
<reference key="9">
    <citation type="journal article" date="1999" name="J. Virol.">
        <title>Viral immediate-early proteins abrogate the modification by SUMO-1 of PML and Sp100 proteins, correlating with nuclear body disruption.</title>
        <authorList>
            <person name="Mueller S."/>
            <person name="Dejean A."/>
        </authorList>
    </citation>
    <scope>INHIBITION OF SUMOYLATION BY HHV-5 (MICROBIAL INFECTION)</scope>
</reference>
<reference key="10">
    <citation type="journal article" date="1999" name="J. Cell Sci.">
        <title>Splice variants of the nuclear dot-associated Sp100 protein contain homologies to HMG-1 and a human nuclear phosphoprotein-box motif.</title>
        <authorList>
            <person name="Guldner H.H."/>
            <person name="Szostecki C."/>
            <person name="Schroeder P."/>
            <person name="Matschl U."/>
            <person name="Jensen K."/>
            <person name="Lueders C."/>
            <person name="Will H."/>
            <person name="Sternsdorf T."/>
        </authorList>
    </citation>
    <scope>NUCLEOTIDE SEQUENCE [GENOMIC DNA] OF 477-879 (ISOFORMS SP100-B AND SP100-HMG)</scope>
    <scope>PARTIAL NUCLEOTIDE SEQUENCE [GENOMIC DNA] (ISOFORM SPALT-C)</scope>
    <source>
        <tissue>Cervix carcinoma</tissue>
    </source>
</reference>
<reference key="11">
    <citation type="journal article" date="2000" name="Genomics">
        <title>Back to the roots of a new exon-the molecular archaeology of a SP100 splice variant.</title>
        <authorList>
            <person name="Rogalla P."/>
            <person name="Kazmierczak B."/>
            <person name="Flohr A.M."/>
            <person name="Hauke S."/>
            <person name="Bullerdiek J."/>
        </authorList>
    </citation>
    <scope>NUCLEOTIDE SEQUENCE [GENOMIC DNA] OF 699-879 (ISOFORM SP100-HMG)</scope>
    <source>
        <tissue>Cervix carcinoma</tissue>
    </source>
</reference>
<reference key="12">
    <citation type="journal article" date="2001" name="Genome Biol.">
        <title>Molecular archeology of an SP100 splice variant revisited: dating the retrotranscription and Alu insertion events.</title>
        <authorList>
            <person name="Devor E.J."/>
        </authorList>
    </citation>
    <scope>NUCLEOTIDE SEQUENCE [GENOMIC DNA] OF 699-879 (ISOFORM SP100-HMG)</scope>
</reference>
<reference key="13">
    <citation type="journal article" date="1997" name="J. Cell Biol.">
        <title>Evidence for covalent modification of the nuclear dot-associated proteins PML and Sp100 by PIC1/SUMO-1.</title>
        <authorList>
            <person name="Sternsdorf T."/>
            <person name="Jensen K."/>
            <person name="Will H."/>
        </authorList>
    </citation>
    <scope>SUMOYLATION WITH SUMO1</scope>
    <scope>SUBCELLULAR LOCATION</scope>
</reference>
<reference key="14">
    <citation type="journal article" date="1999" name="J. Biol. Chem.">
        <title>The nuclear dot protein sp100, characterization of domains necessary for dimerization, subcellular localization, and modification by small ubiquitin-like modifiers.</title>
        <authorList>
            <person name="Sternsdorf T."/>
            <person name="Jensen K."/>
            <person name="Reich B."/>
            <person name="Will H."/>
        </authorList>
    </citation>
    <scope>SUMOYLATION AT LYS-297</scope>
    <scope>HOMODIMERIZATION</scope>
</reference>
<reference key="15">
    <citation type="journal article" date="2002" name="Biochem. Biophys. Res. Commun.">
        <title>Recruitment of NBS1 into PML oncogenic domains via interaction with SP100 protein.</title>
        <authorList>
            <person name="Naka K."/>
            <person name="Ikeda K."/>
            <person name="Motoyama N."/>
        </authorList>
    </citation>
    <scope>INTERACTION WITH NBN</scope>
</reference>
<reference key="16">
    <citation type="journal article" date="2002" name="Mol. Cell. Biol.">
        <title>Sp100 interacts with ETS-1 and stimulates its transcriptional activity.</title>
        <authorList>
            <person name="Wasylyk C."/>
            <person name="Schlumberger S.E."/>
            <person name="Criqui-Filipe P."/>
            <person name="Wasylyk B."/>
        </authorList>
    </citation>
    <scope>FUNCTION AS A TRANSCRIPTIONAL COACTIVATOR</scope>
    <scope>INTERACTION WITH ETS1</scope>
    <scope>SUBCELLULAR LOCATION</scope>
</reference>
<reference key="17">
    <citation type="journal article" date="2003" name="Oncogene">
        <title>Sp100 is important for the stimulatory effect of homeodomain-interacting protein kinase-2 on p53-dependent gene expression.</title>
        <authorList>
            <person name="Moeller A."/>
            <person name="Sirma H."/>
            <person name="Hofmann T.G."/>
            <person name="Staege H."/>
            <person name="Gresko E."/>
            <person name="Luedi K.S."/>
            <person name="Klimczak E."/>
            <person name="Droege W."/>
            <person name="Will H."/>
            <person name="Schmitz M.L."/>
        </authorList>
    </citation>
    <scope>FUNCTION IN TP53-DEPENDENT TRANSCRIPTION</scope>
    <scope>INTERACTION WITH HIPK2</scope>
</reference>
<reference key="18">
    <citation type="journal article" date="2004" name="Oncogene">
        <title>SP100 expression modulates ETS1 transcriptional activity and inhibits cell invasion.</title>
        <authorList>
            <person name="Yordy J.S."/>
            <person name="Li R."/>
            <person name="Sementchenko V.I."/>
            <person name="Pei H."/>
            <person name="Muise-Helmericks R.C."/>
            <person name="Watson D.K."/>
        </authorList>
    </citation>
    <scope>FUNCTION AS A TRANSCRIPTIONAL COREPRESSOR</scope>
    <scope>INTERACTION WITH ETS1</scope>
    <scope>INDUCTION BY INTERFERON ALPHA</scope>
</reference>
<reference key="19">
    <citation type="journal article" date="2005" name="Biochem. Biophys. Res. Commun.">
        <title>The mammalian heterochromatin protein 1 binds diverse nuclear proteins through a common motif that targets the chromoshadow domain.</title>
        <authorList>
            <person name="Lechner M.S."/>
            <person name="Schultz D.C."/>
            <person name="Negorev D."/>
            <person name="Maul G.G."/>
            <person name="Rauscher F.J. III"/>
        </authorList>
    </citation>
    <scope>INTERACTION WITH CBX5</scope>
</reference>
<reference key="20">
    <citation type="journal article" date="2005" name="EMBO J.">
        <title>Mediation of Epstein-Barr virus EBNA-LP transcriptional coactivation by Sp100.</title>
        <authorList>
            <person name="Ling P.D."/>
            <person name="Peng R.S."/>
            <person name="Nakajima A."/>
            <person name="Yu J.H."/>
            <person name="Tan J."/>
            <person name="Moses S.M."/>
            <person name="Yang W.H."/>
            <person name="Zhao B."/>
            <person name="Kieff E."/>
            <person name="Bloch K.D."/>
            <person name="Bloch D.B."/>
        </authorList>
    </citation>
    <scope>FUNCTION</scope>
    <scope>INTERACTION WITH EBV EBNA-LP (MICROBIAL INFECTION)</scope>
</reference>
<reference key="21">
    <citation type="journal article" date="2005" name="Mol. Cell. Biol.">
        <title>Suppression of alternative lengthening of telomeres by Sp100-mediated sequestration of the MRE11/RAD50/NBS1 complex.</title>
        <authorList>
            <person name="Jiang W.Q."/>
            <person name="Zhong Z.H."/>
            <person name="Henson J.D."/>
            <person name="Neumann A.A."/>
            <person name="Chang A.C."/>
            <person name="Reddel R.R."/>
        </authorList>
    </citation>
    <scope>FUNCTION IN TELOMERE SHORTENING</scope>
    <scope>INTERACTION WITH MRN COMPLEX</scope>
</reference>
<reference key="22">
    <citation type="journal article" date="2005" name="Oncogene">
        <title>SP100 inhibits ETS1 activity in primary endothelial cells.</title>
        <authorList>
            <person name="Yordy J.S."/>
            <person name="Moussa O."/>
            <person name="Pei H."/>
            <person name="Chaussabel D."/>
            <person name="Li R."/>
            <person name="Watson D.K."/>
        </authorList>
    </citation>
    <scope>FUNCTION IN ENDOTHELIAL CELL MIGRATION</scope>
    <scope>INDUCTION</scope>
</reference>
<reference key="23">
    <citation type="journal article" date="2006" name="Cell">
        <title>Global, in vivo, and site-specific phosphorylation dynamics in signaling networks.</title>
        <authorList>
            <person name="Olsen J.V."/>
            <person name="Blagoev B."/>
            <person name="Gnad F."/>
            <person name="Macek B."/>
            <person name="Kumar C."/>
            <person name="Mortensen P."/>
            <person name="Mann M."/>
        </authorList>
    </citation>
    <scope>PHOSPHORYLATION [LARGE SCALE ANALYSIS] AT SER-18 AND SER-331</scope>
    <scope>IDENTIFICATION BY MASS SPECTROMETRY [LARGE SCALE ANALYSIS]</scope>
    <source>
        <tissue>Cervix carcinoma</tissue>
    </source>
</reference>
<reference key="24">
    <citation type="journal article" date="2007" name="EMBO J.">
        <title>FLASH links the CD95 signaling pathway to the cell nucleus and nuclear bodies.</title>
        <authorList>
            <person name="Milovic-Holm K."/>
            <person name="Krieghoff E."/>
            <person name="Jensen K."/>
            <person name="Will H."/>
            <person name="Hofmann T.G."/>
        </authorList>
    </citation>
    <scope>FUNCTION IN FAS-MEDIATED APOPTOSIS</scope>
    <scope>INTERACTION WITH CASP8AP2</scope>
    <scope>SUBCELLULAR LOCATION</scope>
</reference>
<reference key="25">
    <citation type="journal article" date="2008" name="Proc. Natl. Acad. Sci. U.S.A.">
        <title>A quantitative atlas of mitotic phosphorylation.</title>
        <authorList>
            <person name="Dephoure N."/>
            <person name="Zhou C."/>
            <person name="Villen J."/>
            <person name="Beausoleil S.A."/>
            <person name="Bakalarski C.E."/>
            <person name="Elledge S.J."/>
            <person name="Gygi S.P."/>
        </authorList>
    </citation>
    <scope>PHOSPHORYLATION [LARGE SCALE ANALYSIS] AT SER-407; SER-409 AND SER-410</scope>
    <scope>IDENTIFICATION BY MASS SPECTROMETRY [LARGE SCALE ANALYSIS]</scope>
    <source>
        <tissue>Cervix carcinoma</tissue>
    </source>
</reference>
<reference key="26">
    <citation type="journal article" date="2009" name="Sci. Signal.">
        <title>Quantitative phosphoproteomic analysis of T cell receptor signaling reveals system-wide modulation of protein-protein interactions.</title>
        <authorList>
            <person name="Mayya V."/>
            <person name="Lundgren D.H."/>
            <person name="Hwang S.-I."/>
            <person name="Rezaul K."/>
            <person name="Wu L."/>
            <person name="Eng J.K."/>
            <person name="Rodionov V."/>
            <person name="Han D.K."/>
        </authorList>
    </citation>
    <scope>PHOSPHORYLATION [LARGE SCALE ANALYSIS] AT SER-171; SER-407; SER-409 AND SER-410</scope>
    <scope>IDENTIFICATION BY MASS SPECTROMETRY [LARGE SCALE ANALYSIS]</scope>
    <source>
        <tissue>Leukemic T-cell</tissue>
    </source>
</reference>
<reference key="27">
    <citation type="journal article" date="2010" name="Cancer Res.">
        <title>Sp100 as a potent tumor suppressor: accelerated senescence and rapid malignant transformation of human fibroblasts through modulation of an embryonic stem cell program.</title>
        <authorList>
            <person name="Negorev D.G."/>
            <person name="Vladimirova O.V."/>
            <person name="Kossenkov A.V."/>
            <person name="Nikonova E.V."/>
            <person name="Demarest R.M."/>
            <person name="Capobianco A.J."/>
            <person name="Showe M.K."/>
            <person name="Rauscher F.J. III"/>
            <person name="Showe L.C."/>
            <person name="Maul G.G."/>
        </authorList>
    </citation>
    <scope>RETRACTED PAPER</scope>
</reference>
<reference key="28">
    <citation type="journal article" date="2013" name="Cancer Res.">
        <authorList>
            <person name="Negorev D.G."/>
            <person name="Vladimirova O.V."/>
            <person name="Kossenkov A.V."/>
            <person name="Demarest R.M."/>
            <person name="Showe M.K."/>
            <person name="Rauscher F.J. III"/>
            <person name="Showe L.C."/>
            <person name="Nikonova E.V."/>
            <person name="Capobianco A.J."/>
        </authorList>
    </citation>
    <scope>RETRACTION NOTICE OF PUBMED:21118961</scope>
</reference>
<reference key="29">
    <citation type="journal article" date="2010" name="Sci. Signal.">
        <title>Quantitative phosphoproteomics reveals widespread full phosphorylation site occupancy during mitosis.</title>
        <authorList>
            <person name="Olsen J.V."/>
            <person name="Vermeulen M."/>
            <person name="Santamaria A."/>
            <person name="Kumar C."/>
            <person name="Miller M.L."/>
            <person name="Jensen L.J."/>
            <person name="Gnad F."/>
            <person name="Cox J."/>
            <person name="Jensen T.S."/>
            <person name="Nigg E.A."/>
            <person name="Brunak S."/>
            <person name="Mann M."/>
        </authorList>
    </citation>
    <scope>PHOSPHORYLATION [LARGE SCALE ANALYSIS] AT SER-157; SER-362; SER-407; SER-409 AND SER-410</scope>
    <scope>IDENTIFICATION BY MASS SPECTROMETRY [LARGE SCALE ANALYSIS]</scope>
    <source>
        <tissue>Cervix carcinoma</tissue>
    </source>
</reference>
<reference key="30">
    <citation type="journal article" date="2011" name="Biochem. Biophys. Res. Commun.">
        <title>Cdc20 mediates D-box-dependent degradation of Sp100.</title>
        <authorList>
            <person name="Wang R."/>
            <person name="Li K.M."/>
            <person name="Zhou C.H."/>
            <person name="Xue J.L."/>
            <person name="Ji C.N."/>
            <person name="Chen J.Z."/>
        </authorList>
    </citation>
    <scope>DOMAIN D-BOX MOTIF</scope>
    <scope>MUTAGENESIS OF ARG-165 AND LEU-168</scope>
</reference>
<reference key="31">
    <citation type="journal article" date="2011" name="Int. J. Oncol.">
        <title>SP100 reduces malignancy of human glioma cells.</title>
        <authorList>
            <person name="Held-Feindt J."/>
            <person name="Hattermann K."/>
            <person name="Knerlich-Lukoschus F."/>
            <person name="Mehdorn H.M."/>
            <person name="Mentlein R."/>
        </authorList>
    </citation>
    <scope>FUNCTION IN CELL PROLIFERATION</scope>
</reference>
<reference key="32">
    <citation type="journal article" date="2011" name="J. Virol.">
        <title>Human cytomegalovirus infection causes degradation of Sp100 proteins that suppress viral gene expression.</title>
        <authorList>
            <person name="Kim Y.E."/>
            <person name="Lee J.H."/>
            <person name="Kim E.T."/>
            <person name="Shin H.J."/>
            <person name="Gu S.Y."/>
            <person name="Seol H.S."/>
            <person name="Ling P.D."/>
            <person name="Lee C.H."/>
            <person name="Ahn J.H."/>
        </authorList>
    </citation>
    <scope>FUNCTION</scope>
    <scope>INTERACTION WITH HHV-5 PROTEIN UL123 (MICROBIAL INFECTION)</scope>
    <scope>INDUCTION BY INTERFERON</scope>
</reference>
<reference key="33">
    <citation type="journal article" date="2012" name="Proc. Natl. Acad. Sci. U.S.A.">
        <title>N-terminal acetylome analyses and functional insights of the N-terminal acetyltransferase NatB.</title>
        <authorList>
            <person name="Van Damme P."/>
            <person name="Lasa M."/>
            <person name="Polevoda B."/>
            <person name="Gazquez C."/>
            <person name="Elosegui-Artola A."/>
            <person name="Kim D.S."/>
            <person name="De Juan-Pardo E."/>
            <person name="Demeyer K."/>
            <person name="Hole K."/>
            <person name="Larrea E."/>
            <person name="Timmerman E."/>
            <person name="Prieto J."/>
            <person name="Arnesen T."/>
            <person name="Sherman F."/>
            <person name="Gevaert K."/>
            <person name="Aldabe R."/>
        </authorList>
    </citation>
    <scope>ACETYLATION [LARGE SCALE ANALYSIS] AT ALA-2</scope>
    <scope>CLEAVAGE OF INITIATOR METHIONINE [LARGE SCALE ANALYSIS]</scope>
    <scope>IDENTIFICATION BY MASS SPECTROMETRY [LARGE SCALE ANALYSIS]</scope>
</reference>
<reference key="34">
    <citation type="journal article" date="2013" name="J. Proteome Res.">
        <title>Toward a comprehensive characterization of a human cancer cell phosphoproteome.</title>
        <authorList>
            <person name="Zhou H."/>
            <person name="Di Palma S."/>
            <person name="Preisinger C."/>
            <person name="Peng M."/>
            <person name="Polat A.N."/>
            <person name="Heck A.J."/>
            <person name="Mohammed S."/>
        </authorList>
    </citation>
    <scope>PHOSPHORYLATION [LARGE SCALE ANALYSIS] AT SER-157; SER-171; SER-180; SER-362; SER-394 AND SER-451</scope>
    <scope>IDENTIFICATION BY MASS SPECTROMETRY [LARGE SCALE ANALYSIS]</scope>
    <source>
        <tissue>Cervix carcinoma</tissue>
        <tissue>Erythroleukemia</tissue>
    </source>
</reference>
<reference key="35">
    <citation type="journal article" date="2014" name="J. Proteomics">
        <title>An enzyme assisted RP-RPLC approach for in-depth analysis of human liver phosphoproteome.</title>
        <authorList>
            <person name="Bian Y."/>
            <person name="Song C."/>
            <person name="Cheng K."/>
            <person name="Dong M."/>
            <person name="Wang F."/>
            <person name="Huang J."/>
            <person name="Sun D."/>
            <person name="Wang L."/>
            <person name="Ye M."/>
            <person name="Zou H."/>
        </authorList>
    </citation>
    <scope>PHOSPHORYLATION [LARGE SCALE ANALYSIS] AT SER-18; SER-157; SER-228; SER-362; SER-407; SER-409 AND SER-410</scope>
    <scope>IDENTIFICATION BY MASS SPECTROMETRY [LARGE SCALE ANALYSIS]</scope>
    <source>
        <tissue>Liver</tissue>
    </source>
</reference>
<reference key="36">
    <citation type="journal article" date="2014" name="Nat. Struct. Mol. Biol.">
        <title>Uncovering global SUMOylation signaling networks in a site-specific manner.</title>
        <authorList>
            <person name="Hendriks I.A."/>
            <person name="D'Souza R.C."/>
            <person name="Yang B."/>
            <person name="Verlaan-de Vries M."/>
            <person name="Mann M."/>
            <person name="Vertegaal A.C."/>
        </authorList>
    </citation>
    <scope>SUMOYLATION [LARGE SCALE ANALYSIS] AT LYS-306 AND LYS-387</scope>
    <scope>IDENTIFICATION BY MASS SPECTROMETRY [LARGE SCALE ANALYSIS]</scope>
</reference>
<reference key="37">
    <citation type="journal article" date="2015" name="Cell Rep.">
        <title>SUMO-2 orchestrates chromatin modifiers in response to DNA damage.</title>
        <authorList>
            <person name="Hendriks I.A."/>
            <person name="Treffers L.W."/>
            <person name="Verlaan-de Vries M."/>
            <person name="Olsen J.V."/>
            <person name="Vertegaal A.C."/>
        </authorList>
    </citation>
    <scope>SUMOYLATION [LARGE SCALE ANALYSIS] AT LYS-306</scope>
    <scope>IDENTIFICATION BY MASS SPECTROMETRY [LARGE SCALE ANALYSIS]</scope>
</reference>
<reference key="38">
    <citation type="journal article" date="2015" name="Genes Dev.">
        <title>Screen identifies bromodomain protein ZMYND8 in chromatin recognition of transcription-associated DNA damage that promotes homologous recombination.</title>
        <authorList>
            <person name="Gong F."/>
            <person name="Chiu L.Y."/>
            <person name="Cox B."/>
            <person name="Aymard F."/>
            <person name="Clouaire T."/>
            <person name="Leung J.W."/>
            <person name="Cammarata M."/>
            <person name="Perez M."/>
            <person name="Agarwal P."/>
            <person name="Brodbelt J.S."/>
            <person name="Legube G."/>
            <person name="Miller K.M."/>
        </authorList>
    </citation>
    <scope>SUBCELLULAR LOCATION</scope>
</reference>
<reference key="39">
    <citation type="journal article" date="2015" name="Mol. Cell. Proteomics">
        <title>System-wide analysis of SUMOylation dynamics in response to replication stress reveals novel small ubiquitin-like modified target proteins and acceptor lysines relevant for genome stability.</title>
        <authorList>
            <person name="Xiao Z."/>
            <person name="Chang J.G."/>
            <person name="Hendriks I.A."/>
            <person name="Sigurdsson J.O."/>
            <person name="Olsen J.V."/>
            <person name="Vertegaal A.C."/>
        </authorList>
    </citation>
    <scope>SUMOYLATION [LARGE SCALE ANALYSIS] AT LYS-306</scope>
    <scope>IDENTIFICATION BY MASS SPECTROMETRY [LARGE SCALE ANALYSIS]</scope>
</reference>
<reference key="40">
    <citation type="journal article" date="2016" name="Sci. Rep.">
        <title>SUMO5, a novel poly-sumo isoform, regulates pml nuclear bodies.</title>
        <authorList>
            <person name="Liang Y.C."/>
            <person name="Lee C.C."/>
            <person name="Yao Y.L."/>
            <person name="Lai C.C."/>
            <person name="Schmitz M.L."/>
            <person name="Yang W.M."/>
        </authorList>
    </citation>
    <scope>INTERACTION WITH SUMO1P1/SUMO5</scope>
    <scope>SUBCELLULAR LOCATION</scope>
</reference>
<reference key="41">
    <citation type="journal article" date="2017" name="Nat. Struct. Mol. Biol.">
        <title>Site-specific mapping of the human SUMO proteome reveals co-modification with phosphorylation.</title>
        <authorList>
            <person name="Hendriks I.A."/>
            <person name="Lyon D."/>
            <person name="Young C."/>
            <person name="Jensen L.J."/>
            <person name="Vertegaal A.C."/>
            <person name="Nielsen M.L."/>
        </authorList>
    </citation>
    <scope>SUMOYLATION [LARGE SCALE ANALYSIS] AT LYS-241; LYS-300; LYS-306; LYS-366 AND LYS-594</scope>
    <scope>IDENTIFICATION BY MASS SPECTROMETRY [LARGE SCALE ANALYSIS]</scope>
</reference>
<sequence length="879" mass="100417">MAGGGGDLSTRRLNECISPVANEMNHLPAHSHDLQRMFTEDQGVDDRLLYDIVFKHFKRNKVEISNAIKKTFPFLEGLRDRDLITNKMFEDSQDSCRNLVPVQRVVYNVLSELEKTFNLPVLEALFSDVNMQEYPDLIHIYKGFENVIHDKLPLQESEEEEREERSGLQLSLEQGTGENSFRSLTWPPSGSPSHAGTTPPENGLSEHPCETEQINAKRKDTTSDKDDSLGSQQTNEQCAQKAEPTESCEQIAVQVNNGDAGREMPCPLPCDEESPEAELHNHGIQINSCSVRLVDIKKEKPFSNSKVECQAQARTHHNQASDIIVISSEDSEGSTDVDEPLEVFISAPRSEPVINNDNPLESNDEKEGQEATCSRPQIVPEPMDFRKLSTFRESFKKRVIGQDHDFSESSEEEAPAEASSGALRSKHGEKAPMTSRSTSTWRIPSRKRRFSSSDFSDLSNGEELQETCSSSLRRGSGSQPQEPENKKCSCVMCFPKGVPRSQEARTESSQASDMMDTMDVENNSTLEKHSGKRRKKRRHRSKVNGLQRGRKKDRPRKHLTLNNKVQKKRWQQRGRKANTRPLKRRRKRGPRIPKDENINFKQSELPVTCGEVKGTLYKERFKQGTSKKCIQSEDKKWFTPREFEIEGDRGASKNWKLSIRCGGYTLKVLMENKFLPEPPSTRKKRILESHNNTLVDPCEEHKKKNPDASVKFSEFLKKCSETWKTIFAKEKGKFEDMAKADKAHYEREMKTYIPPKGEKKKKFKDPNAPKRPPLAFFLFCSEYRPKIKGEHPGLSIDDVVKKLAGMWNNTAAADKQFYEKKAAKLKEKYKKDIAAYRAKGKPNSAKKRVVKAEKSKKKKEEEEDEEDEQEEENEEDDDK</sequence>
<evidence type="ECO:0000255" key="1"/>
<evidence type="ECO:0000255" key="2">
    <source>
        <dbReference type="PROSITE-ProRule" id="PRU00185"/>
    </source>
</evidence>
<evidence type="ECO:0000255" key="3">
    <source>
        <dbReference type="PROSITE-ProRule" id="PRU00267"/>
    </source>
</evidence>
<evidence type="ECO:0000255" key="4">
    <source>
        <dbReference type="PROSITE-ProRule" id="PRU00747"/>
    </source>
</evidence>
<evidence type="ECO:0000256" key="5">
    <source>
        <dbReference type="SAM" id="MobiDB-lite"/>
    </source>
</evidence>
<evidence type="ECO:0000269" key="6">
    <source>
    </source>
</evidence>
<evidence type="ECO:0000269" key="7">
    <source>
    </source>
</evidence>
<evidence type="ECO:0000269" key="8">
    <source>
    </source>
</evidence>
<evidence type="ECO:0000269" key="9">
    <source>
    </source>
</evidence>
<evidence type="ECO:0000269" key="10">
    <source>
    </source>
</evidence>
<evidence type="ECO:0000269" key="11">
    <source>
    </source>
</evidence>
<evidence type="ECO:0000269" key="12">
    <source>
    </source>
</evidence>
<evidence type="ECO:0000269" key="13">
    <source>
    </source>
</evidence>
<evidence type="ECO:0000269" key="14">
    <source>
    </source>
</evidence>
<evidence type="ECO:0000269" key="15">
    <source>
    </source>
</evidence>
<evidence type="ECO:0000269" key="16">
    <source>
    </source>
</evidence>
<evidence type="ECO:0000269" key="17">
    <source>
    </source>
</evidence>
<evidence type="ECO:0000269" key="18">
    <source>
    </source>
</evidence>
<evidence type="ECO:0000269" key="19">
    <source>
    </source>
</evidence>
<evidence type="ECO:0000269" key="20">
    <source>
    </source>
</evidence>
<evidence type="ECO:0000269" key="21">
    <source>
    </source>
</evidence>
<evidence type="ECO:0000269" key="22">
    <source>
    </source>
</evidence>
<evidence type="ECO:0000303" key="23">
    <source>
    </source>
</evidence>
<evidence type="ECO:0000303" key="24">
    <source>
    </source>
</evidence>
<evidence type="ECO:0000303" key="25">
    <source>
    </source>
</evidence>
<evidence type="ECO:0000303" key="26">
    <source>
    </source>
</evidence>
<evidence type="ECO:0000303" key="27">
    <source>
    </source>
</evidence>
<evidence type="ECO:0000305" key="28"/>
<evidence type="ECO:0007744" key="29">
    <source>
    </source>
</evidence>
<evidence type="ECO:0007744" key="30">
    <source>
    </source>
</evidence>
<evidence type="ECO:0007744" key="31">
    <source>
    </source>
</evidence>
<evidence type="ECO:0007744" key="32">
    <source>
    </source>
</evidence>
<evidence type="ECO:0007744" key="33">
    <source>
    </source>
</evidence>
<evidence type="ECO:0007744" key="34">
    <source>
    </source>
</evidence>
<evidence type="ECO:0007744" key="35">
    <source>
    </source>
</evidence>
<evidence type="ECO:0007744" key="36">
    <source>
    </source>
</evidence>
<evidence type="ECO:0007744" key="37">
    <source>
    </source>
</evidence>
<evidence type="ECO:0007744" key="38">
    <source>
    </source>
</evidence>
<evidence type="ECO:0007744" key="39">
    <source>
    </source>
</evidence>
<evidence type="ECO:0007829" key="40">
    <source>
        <dbReference type="PDB" id="1H5P"/>
    </source>
</evidence>
<evidence type="ECO:0007829" key="41">
    <source>
        <dbReference type="PDB" id="5PXL"/>
    </source>
</evidence>
<keyword id="KW-0002">3D-structure</keyword>
<keyword id="KW-0007">Acetylation</keyword>
<keyword id="KW-0025">Alternative splicing</keyword>
<keyword id="KW-0175">Coiled coil</keyword>
<keyword id="KW-0963">Cytoplasm</keyword>
<keyword id="KW-0238">DNA-binding</keyword>
<keyword id="KW-0945">Host-virus interaction</keyword>
<keyword id="KW-1017">Isopeptide bond</keyword>
<keyword id="KW-0539">Nucleus</keyword>
<keyword id="KW-0597">Phosphoprotein</keyword>
<keyword id="KW-1267">Proteomics identification</keyword>
<keyword id="KW-1185">Reference proteome</keyword>
<keyword id="KW-0677">Repeat</keyword>
<keyword id="KW-0804">Transcription</keyword>
<keyword id="KW-0805">Transcription regulation</keyword>
<keyword id="KW-0832">Ubl conjugation</keyword>
<accession>P23497</accession>
<accession>B4DDX5</accession>
<accession>B8ZZD8</accession>
<accession>E7EUA7</accession>
<accession>E9PH61</accession>
<accession>F8WFE2</accession>
<accession>O75450</accession>
<accession>Q13343</accession>
<accession>Q8TE34</accession>
<accession>Q96F70</accession>
<accession>Q96T24</accession>
<accession>Q96T95</accession>
<accession>Q9NP33</accession>
<accession>Q9UE32</accession>
<gene>
    <name type="primary">SP100</name>
</gene>
<feature type="initiator methionine" description="Removed" evidence="33">
    <location>
        <position position="1"/>
    </location>
</feature>
<feature type="chain" id="PRO_0000074096" description="Nuclear autoantigen Sp-100">
    <location>
        <begin position="2"/>
        <end position="879"/>
    </location>
</feature>
<feature type="domain" description="HSR" evidence="4">
    <location>
        <begin position="33"/>
        <end position="149"/>
    </location>
</feature>
<feature type="domain" description="SAND" evidence="2">
    <location>
        <begin position="595"/>
        <end position="676"/>
    </location>
</feature>
<feature type="DNA-binding region" description="HMG box 1" evidence="3">
    <location>
        <begin position="677"/>
        <end position="753"/>
    </location>
</feature>
<feature type="DNA-binding region" description="HMG box 2" evidence="3">
    <location>
        <begin position="769"/>
        <end position="837"/>
    </location>
</feature>
<feature type="region of interest" description="Disordered" evidence="5">
    <location>
        <begin position="154"/>
        <end position="245"/>
    </location>
</feature>
<feature type="region of interest" description="Sufficient to mediate interaction with ETS1">
    <location>
        <begin position="333"/>
        <end position="478"/>
    </location>
</feature>
<feature type="region of interest" description="Disordered" evidence="5">
    <location>
        <begin position="345"/>
        <end position="386"/>
    </location>
</feature>
<feature type="region of interest" description="Disordered" evidence="5">
    <location>
        <begin position="401"/>
        <end position="596"/>
    </location>
</feature>
<feature type="region of interest" description="Disordered" evidence="5">
    <location>
        <begin position="835"/>
        <end position="879"/>
    </location>
</feature>
<feature type="short sequence motif" description="D-box; recognition signal for CDC20-mediated degradation">
    <location>
        <begin position="165"/>
        <end position="168"/>
    </location>
</feature>
<feature type="short sequence motif" description="PxVxL motif">
    <location>
        <begin position="284"/>
        <end position="297"/>
    </location>
</feature>
<feature type="short sequence motif" description="Nuclear localization signal" evidence="1">
    <location>
        <begin position="536"/>
        <end position="553"/>
    </location>
</feature>
<feature type="short sequence motif" description="Nuclear localization signal" evidence="1">
    <location>
        <begin position="568"/>
        <end position="592"/>
    </location>
</feature>
<feature type="short sequence motif" description="Nuclear localization signal" evidence="1">
    <location>
        <begin position="717"/>
        <end position="734"/>
    </location>
</feature>
<feature type="compositionally biased region" description="Polar residues" evidence="5">
    <location>
        <begin position="176"/>
        <end position="200"/>
    </location>
</feature>
<feature type="compositionally biased region" description="Basic and acidic residues" evidence="5">
    <location>
        <begin position="207"/>
        <end position="228"/>
    </location>
</feature>
<feature type="compositionally biased region" description="Polar residues" evidence="5">
    <location>
        <begin position="229"/>
        <end position="238"/>
    </location>
</feature>
<feature type="compositionally biased region" description="Polar residues" evidence="5">
    <location>
        <begin position="466"/>
        <end position="482"/>
    </location>
</feature>
<feature type="compositionally biased region" description="Basic residues" evidence="5">
    <location>
        <begin position="530"/>
        <end position="591"/>
    </location>
</feature>
<feature type="compositionally biased region" description="Basic residues" evidence="5">
    <location>
        <begin position="838"/>
        <end position="857"/>
    </location>
</feature>
<feature type="compositionally biased region" description="Acidic residues" evidence="5">
    <location>
        <begin position="861"/>
        <end position="879"/>
    </location>
</feature>
<feature type="modified residue" description="N-acetylalanine" evidence="33">
    <location>
        <position position="2"/>
    </location>
</feature>
<feature type="modified residue" description="Phosphoserine" evidence="29 35">
    <location>
        <position position="18"/>
    </location>
</feature>
<feature type="modified residue" description="Phosphoserine" evidence="32 34 35">
    <location>
        <position position="157"/>
    </location>
</feature>
<feature type="modified residue" description="Phosphoserine" evidence="31 34">
    <location>
        <position position="171"/>
    </location>
</feature>
<feature type="modified residue" description="Phosphoserine" evidence="34">
    <location>
        <position position="180"/>
    </location>
</feature>
<feature type="modified residue" description="Phosphoserine" evidence="35">
    <location>
        <position position="228"/>
    </location>
</feature>
<feature type="modified residue" description="Phosphoserine" evidence="29">
    <location>
        <position position="331"/>
    </location>
</feature>
<feature type="modified residue" description="Phosphoserine" evidence="32 34 35">
    <location>
        <position position="362"/>
    </location>
</feature>
<feature type="modified residue" description="Phosphoserine" evidence="34">
    <location>
        <position position="394"/>
    </location>
</feature>
<feature type="modified residue" description="Phosphoserine" evidence="30 31 32 35">
    <location>
        <position position="407"/>
    </location>
</feature>
<feature type="modified residue" description="Phosphoserine" evidence="30 31 32 35">
    <location>
        <position position="409"/>
    </location>
</feature>
<feature type="modified residue" description="Phosphoserine" evidence="30 31 32 35">
    <location>
        <position position="410"/>
    </location>
</feature>
<feature type="modified residue" description="Phosphoserine" evidence="34">
    <location>
        <position position="451"/>
    </location>
</feature>
<feature type="cross-link" description="Glycyl lysine isopeptide (Lys-Gly) (interchain with G-Cter in SUMO2)" evidence="39">
    <location>
        <position position="241"/>
    </location>
</feature>
<feature type="cross-link" description="Glycyl lysine isopeptide (Lys-Gly) (interchain with G-Cter in SUMO)" evidence="6">
    <location>
        <position position="297"/>
    </location>
</feature>
<feature type="cross-link" description="Glycyl lysine isopeptide (Lys-Gly) (interchain with G-Cter in SUMO2)" evidence="39">
    <location>
        <position position="300"/>
    </location>
</feature>
<feature type="cross-link" description="Glycyl lysine isopeptide (Lys-Gly) (interchain with G-Cter in SUMO2)" evidence="36 37 38 39">
    <location>
        <position position="306"/>
    </location>
</feature>
<feature type="cross-link" description="Glycyl lysine isopeptide (Lys-Gly) (interchain with G-Cter in SUMO2)" evidence="39">
    <location>
        <position position="366"/>
    </location>
</feature>
<feature type="cross-link" description="Glycyl lysine isopeptide (Lys-Gly) (interchain with G-Cter in SUMO2)" evidence="36">
    <location>
        <position position="387"/>
    </location>
</feature>
<feature type="cross-link" description="Glycyl lysine isopeptide (Lys-Gly) (interchain with G-Cter in SUMO2)" evidence="39">
    <location>
        <position position="594"/>
    </location>
</feature>
<feature type="splice variant" id="VSP_045868" description="In isoform 7." evidence="24">
    <original>MAGGGGDLSTRRLNECISPVANEMNHLPAHSHDLQR</original>
    <variation>M</variation>
    <location>
        <begin position="1"/>
        <end position="36"/>
    </location>
</feature>
<feature type="splice variant" id="VSP_045869" description="In isoform 6." evidence="24">
    <location>
        <begin position="11"/>
        <end position="35"/>
    </location>
</feature>
<feature type="splice variant" id="VSP_045870" description="In isoform 6." evidence="24">
    <location>
        <begin position="428"/>
        <end position="430"/>
    </location>
</feature>
<feature type="splice variant" id="VSP_005982" description="In isoform SpAlt-C." evidence="28">
    <original>RFSSSDFSDLSNGEELQETCSSSL</original>
    <variation>LKKKKKKKQCHPQPQPQRGLLEQS</variation>
    <location>
        <begin position="449"/>
        <end position="472"/>
    </location>
</feature>
<feature type="splice variant" id="VSP_005983" description="In isoform SpAlt-C." evidence="28">
    <location>
        <begin position="473"/>
        <end position="879"/>
    </location>
</feature>
<feature type="splice variant" id="VSP_005978" description="In isoform Sp100-A, isoform 6 and isoform 7." evidence="24 25 26">
    <original>SQP</original>
    <variation>KED</variation>
    <location>
        <begin position="478"/>
        <end position="480"/>
    </location>
</feature>
<feature type="splice variant" id="VSP_005979" description="In isoform Sp100-A, isoform 6 and isoform 7." evidence="24 25 26">
    <location>
        <begin position="481"/>
        <end position="879"/>
    </location>
</feature>
<feature type="splice variant" id="VSP_005980" description="In isoform Sp100-B." evidence="27">
    <original>RILE</original>
    <variation>VMIK</variation>
    <location>
        <begin position="685"/>
        <end position="688"/>
    </location>
</feature>
<feature type="splice variant" id="VSP_005981" description="In isoform Sp100-B." evidence="27">
    <location>
        <begin position="689"/>
        <end position="879"/>
    </location>
</feature>
<feature type="splice variant" id="VSP_005984" description="In isoform Sp100-C." evidence="23">
    <original>EEHKKKNPDASVKFSEFLKKCSETWKTIFAKEKGKFEDMAKADKAHYEREMKTYIPPKGEKKKKFKDPNAPKRPPLAFFLFCSEYRPKIKGEHPGLSIDDVVKKLAGMWNNTAAADKQFYEKKAAKLKEKYKKDIAAYRAKGKPNSAKKRVVKAEKSKKKKEEEEDEEDEQEEENEEDDDK</original>
    <variation>PENSNICEVCNKWGRLFCCDTCPRSFHEHCHIPSVEANKNPWSCIFCRIKTIQERCPESQSGHQESEVLMRQMLPEEQLKCEFLLLKVYCDSKSCFFASEPYYNREGSQGPQKPMWLNKVKTSLNEQMYTRVEGFVQDMRLIFHNHKEFYREDKFTRLGIQVQDIFEKNFRNIFAIQETSKNIIMFI</variation>
    <location>
        <begin position="699"/>
        <end position="879"/>
    </location>
</feature>
<feature type="sequence variant" id="VAR_005621" description="In dbSNP:rs12724.">
    <original>M</original>
    <variation>V</variation>
    <location>
        <position position="433"/>
    </location>
</feature>
<feature type="sequence variant" id="VAR_005622" description="In dbSNP:rs2065192164.">
    <original>S</original>
    <variation>P</variation>
    <location>
        <position position="471"/>
    </location>
</feature>
<feature type="sequence variant" id="VAR_034510" description="In dbSNP:rs34700604.">
    <original>E</original>
    <variation>G</variation>
    <location>
        <position position="699"/>
    </location>
</feature>
<feature type="mutagenesis site" description="Prevents CDC20-mediated degradation; when associated with Ala-168." evidence="20">
    <original>R</original>
    <variation>A</variation>
    <location>
        <position position="165"/>
    </location>
</feature>
<feature type="mutagenesis site" description="Prevents CDC20-mediated degradation; when associated with Ala-165." evidence="20">
    <original>L</original>
    <variation>A</variation>
    <location>
        <position position="168"/>
    </location>
</feature>
<feature type="sequence conflict" description="In Ref. 5; BAG56886." evidence="28" ref="5">
    <original>R</original>
    <variation>M</variation>
    <location>
        <position position="47"/>
    </location>
</feature>
<feature type="sequence conflict" description="In Ref. 5; BAG56886." evidence="28" ref="5">
    <original>S</original>
    <variation>P</variation>
    <location>
        <position position="247"/>
    </location>
</feature>
<feature type="sequence conflict" description="In Ref. 5; BAG56886." evidence="28" ref="5">
    <original>Q</original>
    <variation>H</variation>
    <location>
        <position position="402"/>
    </location>
</feature>
<feature type="sequence conflict" description="In Ref. 10; AAL77438/AAL77439." evidence="28" ref="10">
    <original>A</original>
    <variation>R</variation>
    <location>
        <position position="651"/>
    </location>
</feature>
<feature type="strand" evidence="41">
    <location>
        <begin position="466"/>
        <end position="469"/>
    </location>
</feature>
<feature type="strand" evidence="41">
    <location>
        <begin position="471"/>
        <end position="473"/>
    </location>
</feature>
<feature type="turn" evidence="41">
    <location>
        <begin position="474"/>
        <end position="476"/>
    </location>
</feature>
<feature type="strand" evidence="41">
    <location>
        <begin position="477"/>
        <end position="479"/>
    </location>
</feature>
<feature type="helix" evidence="41">
    <location>
        <begin position="491"/>
        <end position="498"/>
    </location>
</feature>
<feature type="helix" evidence="41">
    <location>
        <begin position="499"/>
        <end position="502"/>
    </location>
</feature>
<feature type="helix" evidence="40">
    <location>
        <begin position="600"/>
        <end position="602"/>
    </location>
</feature>
<feature type="strand" evidence="40">
    <location>
        <begin position="603"/>
        <end position="609"/>
    </location>
</feature>
<feature type="strand" evidence="40">
    <location>
        <begin position="612"/>
        <end position="617"/>
    </location>
</feature>
<feature type="helix" evidence="40">
    <location>
        <begin position="618"/>
        <end position="621"/>
    </location>
</feature>
<feature type="helix" evidence="40">
    <location>
        <begin position="624"/>
        <end position="626"/>
    </location>
</feature>
<feature type="strand" evidence="40">
    <location>
        <begin position="630"/>
        <end position="632"/>
    </location>
</feature>
<feature type="turn" evidence="40">
    <location>
        <begin position="633"/>
        <end position="635"/>
    </location>
</feature>
<feature type="strand" evidence="40">
    <location>
        <begin position="636"/>
        <end position="638"/>
    </location>
</feature>
<feature type="helix" evidence="40">
    <location>
        <begin position="640"/>
        <end position="647"/>
    </location>
</feature>
<feature type="helix" evidence="40">
    <location>
        <begin position="655"/>
        <end position="658"/>
    </location>
</feature>
<feature type="helix" evidence="40">
    <location>
        <begin position="666"/>
        <end position="672"/>
    </location>
</feature>
<feature type="strand" evidence="40">
    <location>
        <begin position="673"/>
        <end position="675"/>
    </location>
</feature>
<feature type="sequence conflict" description="In Ref. 2; AAC50743." evidence="28" ref="2">
    <original>M</original>
    <variation>T</variation>
    <location sequence="P23497-3">
        <position position="686"/>
    </location>
</feature>
<feature type="sequence conflict" description="In Ref. 4; AAK51202." evidence="28" ref="4">
    <original>M</original>
    <variation>T</variation>
    <location sequence="P23497-4">
        <position position="826"/>
    </location>
</feature>
<protein>
    <recommendedName>
        <fullName>Nuclear autoantigen Sp-100</fullName>
    </recommendedName>
    <alternativeName>
        <fullName>Nuclear dot-associated Sp100 protein</fullName>
    </alternativeName>
    <alternativeName>
        <fullName>Speckled 100 kDa</fullName>
    </alternativeName>
</protein>
<name>SP100_HUMAN</name>